<feature type="initiator methionine" description="Removed; by host" evidence="4">
    <location>
        <position position="1"/>
    </location>
</feature>
<feature type="chain" id="PRO_0000450929" description="Genome polyprotein">
    <location>
        <begin position="2"/>
        <end position="3033"/>
    </location>
</feature>
<feature type="chain" id="PRO_0000045700" description="Core protein precursor" evidence="13">
    <location>
        <begin position="2"/>
        <end position="191"/>
    </location>
</feature>
<feature type="chain" id="PRO_0000045701" description="Mature core protein">
    <location>
        <begin position="2"/>
        <end position="177"/>
    </location>
</feature>
<feature type="propeptide" id="PRO_0000045702" description="ER anchor for the core protein, removed in mature form by host signal peptidase">
    <location>
        <begin position="178"/>
        <end position="191"/>
    </location>
</feature>
<feature type="chain" id="PRO_0000045703" description="Envelope glycoprotein E1">
    <location>
        <begin position="192"/>
        <end position="383"/>
    </location>
</feature>
<feature type="chain" id="PRO_0000045704" description="Envelope glycoprotein E2">
    <location>
        <begin position="384"/>
        <end position="750"/>
    </location>
</feature>
<feature type="chain" id="PRO_0000045705" description="Viroporin p7">
    <location>
        <begin position="751"/>
        <end position="813"/>
    </location>
</feature>
<feature type="chain" id="PRO_0000045706" description="Protease NS2" evidence="16">
    <location>
        <begin position="814"/>
        <end position="1030"/>
    </location>
</feature>
<feature type="chain" id="PRO_0000045707" description="Serine protease/helicase NS3">
    <location>
        <begin position="1031"/>
        <end position="1661"/>
    </location>
</feature>
<feature type="chain" id="PRO_0000045708" description="Non-structural protein 4A">
    <location>
        <begin position="1662"/>
        <end position="1715"/>
    </location>
</feature>
<feature type="chain" id="PRO_0000045709" description="Non-structural protein 4B">
    <location>
        <begin position="1716"/>
        <end position="1976"/>
    </location>
</feature>
<feature type="chain" id="PRO_0000045710" description="Non-structural protein 5A">
    <location>
        <begin position="1977"/>
        <end position="2442"/>
    </location>
</feature>
<feature type="chain" id="PRO_0000045711" description="RNA-directed RNA polymerase">
    <location>
        <begin position="2443"/>
        <end position="3033"/>
    </location>
</feature>
<feature type="topological domain" description="Cytoplasmic" evidence="13">
    <location>
        <begin position="2"/>
        <end position="168"/>
    </location>
</feature>
<feature type="transmembrane region" description="Helical" evidence="13">
    <location>
        <begin position="169"/>
        <end position="189"/>
    </location>
</feature>
<feature type="topological domain" description="Lumenal" evidence="5">
    <location>
        <begin position="190"/>
        <end position="358"/>
    </location>
</feature>
<feature type="transmembrane region" description="Helical" evidence="5">
    <location>
        <begin position="359"/>
        <end position="379"/>
    </location>
</feature>
<feature type="topological domain" description="Lumenal" evidence="5">
    <location>
        <begin position="380"/>
        <end position="729"/>
    </location>
</feature>
<feature type="transmembrane region" description="Helical" evidence="5">
    <location>
        <begin position="730"/>
        <end position="750"/>
    </location>
</feature>
<feature type="topological domain" description="Lumenal" evidence="5">
    <location>
        <begin position="751"/>
        <end position="761"/>
    </location>
</feature>
<feature type="transmembrane region" description="Helical" evidence="5">
    <location>
        <begin position="762"/>
        <end position="782"/>
    </location>
</feature>
<feature type="topological domain" description="Cytoplasmic" evidence="5">
    <location>
        <begin position="783"/>
        <end position="786"/>
    </location>
</feature>
<feature type="transmembrane region" description="Helical" evidence="5">
    <location>
        <begin position="787"/>
        <end position="807"/>
    </location>
</feature>
<feature type="topological domain" description="Lumenal" evidence="5">
    <location>
        <begin position="808"/>
        <end position="817"/>
    </location>
</feature>
<feature type="transmembrane region" description="Helical" evidence="12">
    <location>
        <begin position="818"/>
        <end position="838"/>
    </location>
</feature>
<feature type="topological domain" description="Cytoplasmic" evidence="12">
    <location>
        <begin position="839"/>
        <end position="885"/>
    </location>
</feature>
<feature type="transmembrane region" description="Helical" evidence="12">
    <location>
        <begin position="886"/>
        <end position="906"/>
    </location>
</feature>
<feature type="topological domain" description="Lumenal" evidence="12">
    <location>
        <begin position="907"/>
        <end position="932"/>
    </location>
</feature>
<feature type="transmembrane region" description="Helical" evidence="12">
    <location>
        <begin position="933"/>
        <end position="953"/>
    </location>
</feature>
<feature type="topological domain" description="Cytoplasmic" evidence="12">
    <location>
        <begin position="954"/>
        <end position="1661"/>
    </location>
</feature>
<feature type="transmembrane region" description="Helical" evidence="13">
    <location>
        <begin position="1662"/>
        <end position="1682"/>
    </location>
</feature>
<feature type="topological domain" description="Cytoplasmic" evidence="13">
    <location>
        <begin position="1683"/>
        <end position="1809"/>
    </location>
</feature>
<feature type="transmembrane region" description="Helical" evidence="13">
    <location>
        <begin position="1810"/>
        <end position="1830"/>
    </location>
</feature>
<feature type="topological domain" description="Lumenal" evidence="5">
    <location>
        <begin position="1831"/>
        <end position="1832"/>
    </location>
</feature>
<feature type="transmembrane region" description="Helical" evidence="13">
    <location>
        <begin position="1833"/>
        <end position="1853"/>
    </location>
</feature>
<feature type="topological domain" description="Cytoplasmic" evidence="13">
    <location>
        <position position="1854"/>
    </location>
</feature>
<feature type="transmembrane region" description="Helical" evidence="13">
    <location>
        <begin position="1855"/>
        <end position="1875"/>
    </location>
</feature>
<feature type="topological domain" description="Lumenal" evidence="13">
    <location>
        <begin position="1876"/>
        <end position="1885"/>
    </location>
</feature>
<feature type="transmembrane region" description="Helical" evidence="13">
    <location>
        <begin position="1886"/>
        <end position="1906"/>
    </location>
</feature>
<feature type="topological domain" description="Cytoplasmic" evidence="13">
    <location>
        <begin position="1907"/>
        <end position="1976"/>
    </location>
</feature>
<feature type="intramembrane region" evidence="5">
    <location>
        <begin position="1977"/>
        <end position="2007"/>
    </location>
</feature>
<feature type="topological domain" description="Cytoplasmic" evidence="5">
    <location>
        <begin position="2008"/>
        <end position="3012"/>
    </location>
</feature>
<feature type="transmembrane region" description="Helical" evidence="5">
    <location>
        <begin position="3013"/>
        <end position="3033"/>
    </location>
</feature>
<feature type="domain" description="Peptidase C18" evidence="16">
    <location>
        <begin position="903"/>
        <end position="1030"/>
    </location>
</feature>
<feature type="domain" description="Peptidase S29" evidence="17">
    <location>
        <begin position="1031"/>
        <end position="1212"/>
    </location>
</feature>
<feature type="domain" description="Helicase ATP-binding" evidence="15">
    <location>
        <begin position="1221"/>
        <end position="1373"/>
    </location>
</feature>
<feature type="domain" description="RdRp catalytic" evidence="14">
    <location>
        <begin position="2656"/>
        <end position="2774"/>
    </location>
</feature>
<feature type="region of interest" description="Disordered" evidence="5">
    <location>
        <begin position="2"/>
        <end position="75"/>
    </location>
</feature>
<feature type="region of interest" description="Interaction with DDX3X" evidence="9">
    <location>
        <begin position="2"/>
        <end position="59"/>
    </location>
</feature>
<feature type="region of interest" description="Interaction with EIF2AK2/PKR" evidence="2">
    <location>
        <begin position="2"/>
        <end position="58"/>
    </location>
</feature>
<feature type="region of interest" description="Interaction with STAT1" evidence="2">
    <location>
        <begin position="2"/>
        <end position="23"/>
    </location>
</feature>
<feature type="region of interest" description="Important for endoplasmic reticulum and mitochondrial localization" evidence="2">
    <location>
        <begin position="112"/>
        <end position="152"/>
    </location>
</feature>
<feature type="region of interest" description="Interaction with APOA2" evidence="6">
    <location>
        <begin position="122"/>
        <end position="173"/>
    </location>
</feature>
<feature type="region of interest" description="Important for lipid droplets localization" evidence="5">
    <location>
        <begin position="164"/>
        <end position="167"/>
    </location>
</feature>
<feature type="region of interest" description="Important for fusion" evidence="5">
    <location>
        <begin position="265"/>
        <end position="296"/>
    </location>
</feature>
<feature type="region of interest" description="HVR1" evidence="5">
    <location>
        <begin position="385"/>
        <end position="412"/>
    </location>
</feature>
<feature type="region of interest" description="HVR2" evidence="5">
    <location>
        <begin position="475"/>
        <end position="480"/>
    </location>
</feature>
<feature type="region of interest" description="CD81-binding 1" evidence="3">
    <location>
        <begin position="482"/>
        <end position="495"/>
    </location>
</feature>
<feature type="region of interest" description="CD81-binding 2" evidence="3">
    <location>
        <begin position="546"/>
        <end position="553"/>
    </location>
</feature>
<feature type="region of interest" description="PKR/eIF2-alpha phosphorylation homology domain (PePHD)">
    <location>
        <begin position="664"/>
        <end position="675"/>
    </location>
</feature>
<feature type="region of interest" description="Protease NS2-3" evidence="3">
    <location>
        <begin position="908"/>
        <end position="1210"/>
    </location>
</feature>
<feature type="region of interest" description="Interaction with host SCPS1" evidence="11">
    <location>
        <begin position="933"/>
        <end position="953"/>
    </location>
</feature>
<feature type="region of interest" description="RNA-binding" evidence="3">
    <location>
        <begin position="1490"/>
        <end position="1502"/>
    </location>
</feature>
<feature type="region of interest" description="NS3-binding" evidence="5">
    <location>
        <begin position="1683"/>
        <end position="1694"/>
    </location>
</feature>
<feature type="region of interest" description="Transcriptional activation" evidence="13">
    <location>
        <begin position="2124"/>
        <end position="2332"/>
    </location>
</feature>
<feature type="region of interest" description="FKBP8-binding" evidence="2">
    <location>
        <begin position="2124"/>
        <end position="2212"/>
    </location>
</feature>
<feature type="region of interest" description="Interaction with non-structural protein 4A" evidence="2">
    <location>
        <begin position="2139"/>
        <end position="2143"/>
    </location>
</feature>
<feature type="region of interest" description="Interaction with host SKP2" evidence="5">
    <location>
        <begin position="2193"/>
        <end position="2460"/>
    </location>
</feature>
<feature type="region of interest" description="Disordered" evidence="18">
    <location>
        <begin position="2193"/>
        <end position="2212"/>
    </location>
</feature>
<feature type="region of interest" description="Interaction with EIF2AK2/PKR" evidence="3">
    <location>
        <begin position="2214"/>
        <end position="2275"/>
    </location>
</feature>
<feature type="region of interest" description="ISDR" evidence="2">
    <location>
        <begin position="2214"/>
        <end position="2249"/>
    </location>
</feature>
<feature type="region of interest" description="NS4B-binding" evidence="13">
    <location>
        <begin position="2249"/>
        <end position="2306"/>
    </location>
</feature>
<feature type="region of interest" description="V3">
    <location>
        <begin position="2299"/>
        <end position="2376"/>
    </location>
</feature>
<feature type="region of interest" description="Disordered" evidence="18">
    <location>
        <begin position="2308"/>
        <end position="2328"/>
    </location>
</feature>
<feature type="region of interest" description="Disordered" evidence="18">
    <location>
        <begin position="2353"/>
        <end position="2431"/>
    </location>
</feature>
<feature type="short sequence motif" description="Nuclear localization signal" evidence="11">
    <location>
        <begin position="5"/>
        <end position="13"/>
    </location>
</feature>
<feature type="short sequence motif" description="Nuclear localization signal" evidence="11">
    <location>
        <begin position="38"/>
        <end position="43"/>
    </location>
</feature>
<feature type="short sequence motif" description="Nuclear localization signal" evidence="11">
    <location>
        <begin position="58"/>
        <end position="64"/>
    </location>
</feature>
<feature type="short sequence motif" description="Nuclear localization signal" evidence="11">
    <location>
        <begin position="66"/>
        <end position="71"/>
    </location>
</feature>
<feature type="short sequence motif" description="DECH box" evidence="11">
    <location>
        <begin position="1320"/>
        <end position="1323"/>
    </location>
</feature>
<feature type="short sequence motif" description="SH3-binding" evidence="13">
    <location>
        <begin position="2322"/>
        <end position="2325"/>
    </location>
</feature>
<feature type="short sequence motif" description="Nuclear localization signal" evidence="2">
    <location>
        <begin position="2327"/>
        <end position="2335"/>
    </location>
</feature>
<feature type="compositionally biased region" description="Basic residues" evidence="18">
    <location>
        <begin position="7"/>
        <end position="16"/>
    </location>
</feature>
<feature type="compositionally biased region" description="Low complexity" evidence="18">
    <location>
        <begin position="32"/>
        <end position="47"/>
    </location>
</feature>
<feature type="compositionally biased region" description="Low complexity" evidence="18">
    <location>
        <begin position="2198"/>
        <end position="2212"/>
    </location>
</feature>
<feature type="compositionally biased region" description="Polar residues" evidence="18">
    <location>
        <begin position="2361"/>
        <end position="2373"/>
    </location>
</feature>
<feature type="active site" description="For protease NS2 activity; shared with dimeric partner" evidence="16">
    <location>
        <position position="956"/>
    </location>
</feature>
<feature type="active site" description="For protease NS2 activity; shared with dimeric partner" evidence="16">
    <location>
        <position position="976"/>
    </location>
</feature>
<feature type="active site" description="For protease NS2 activity; shared with dimeric partner" evidence="16">
    <location>
        <position position="997"/>
    </location>
</feature>
<feature type="active site" description="Charge relay system; for serine protease NS3 activity" evidence="17">
    <location>
        <position position="1087"/>
    </location>
</feature>
<feature type="active site" description="Charge relay system; for serine protease NS3 activity" evidence="17">
    <location>
        <position position="1111"/>
    </location>
</feature>
<feature type="active site" description="Charge relay system; for serine protease NS3 activity" evidence="17">
    <location>
        <position position="1169"/>
    </location>
</feature>
<feature type="binding site" evidence="17">
    <location>
        <position position="1127"/>
    </location>
    <ligand>
        <name>Zn(2+)</name>
        <dbReference type="ChEBI" id="CHEBI:29105"/>
        <label>1</label>
        <note>structural; for NS3 protease activity and NS2/3 auto-cleavage activity</note>
    </ligand>
</feature>
<feature type="binding site" evidence="17">
    <location>
        <position position="1129"/>
    </location>
    <ligand>
        <name>Zn(2+)</name>
        <dbReference type="ChEBI" id="CHEBI:29105"/>
        <label>1</label>
        <note>structural; for NS3 protease activity and NS2/3 auto-cleavage activity</note>
    </ligand>
</feature>
<feature type="binding site" evidence="17">
    <location>
        <position position="1175"/>
    </location>
    <ligand>
        <name>Zn(2+)</name>
        <dbReference type="ChEBI" id="CHEBI:29105"/>
        <label>1</label>
        <note>structural; for NS3 protease activity and NS2/3 auto-cleavage activity</note>
    </ligand>
</feature>
<feature type="binding site" evidence="17">
    <location>
        <position position="1179"/>
    </location>
    <ligand>
        <name>Zn(2+)</name>
        <dbReference type="ChEBI" id="CHEBI:29105"/>
        <label>1</label>
        <note>structural; for NS3 protease activity and NS2/3 auto-cleavage activity</note>
    </ligand>
</feature>
<feature type="binding site" evidence="15">
    <location>
        <begin position="1234"/>
        <end position="1241"/>
    </location>
    <ligand>
        <name>ATP</name>
        <dbReference type="ChEBI" id="CHEBI:30616"/>
    </ligand>
</feature>
<feature type="binding site" evidence="12">
    <location>
        <position position="1241"/>
    </location>
    <ligand>
        <name>Mg(2+)</name>
        <dbReference type="ChEBI" id="CHEBI:18420"/>
        <label>1</label>
        <note>catalytic; for NS3 helicase activity</note>
    </ligand>
</feature>
<feature type="binding site" evidence="12">
    <location>
        <position position="1321"/>
    </location>
    <ligand>
        <name>Mg(2+)</name>
        <dbReference type="ChEBI" id="CHEBI:18420"/>
        <label>1</label>
        <note>catalytic; for NS3 helicase activity</note>
    </ligand>
</feature>
<feature type="binding site" evidence="12">
    <location>
        <position position="2015"/>
    </location>
    <ligand>
        <name>Zn(2+)</name>
        <dbReference type="ChEBI" id="CHEBI:29105"/>
        <label>2</label>
        <note>structural</note>
    </ligand>
</feature>
<feature type="binding site" evidence="12">
    <location>
        <position position="2033"/>
    </location>
    <ligand>
        <name>Zn(2+)</name>
        <dbReference type="ChEBI" id="CHEBI:29105"/>
        <label>2</label>
        <note>structural</note>
    </ligand>
</feature>
<feature type="binding site" evidence="12">
    <location>
        <position position="2035"/>
    </location>
    <ligand>
        <name>Zn(2+)</name>
        <dbReference type="ChEBI" id="CHEBI:29105"/>
        <label>2</label>
        <note>structural</note>
    </ligand>
</feature>
<feature type="binding site" evidence="12">
    <location>
        <position position="2056"/>
    </location>
    <ligand>
        <name>Zn(2+)</name>
        <dbReference type="ChEBI" id="CHEBI:29105"/>
        <label>2</label>
        <note>structural</note>
    </ligand>
</feature>
<feature type="binding site" evidence="3">
    <location>
        <position position="2662"/>
    </location>
    <ligand>
        <name>Mg(2+)</name>
        <dbReference type="ChEBI" id="CHEBI:18420"/>
        <label>2</label>
        <note>catalytic; for RNA-directed RNA polymerase activity</note>
    </ligand>
</feature>
<feature type="binding site" evidence="3">
    <location>
        <position position="2760"/>
    </location>
    <ligand>
        <name>Mg(2+)</name>
        <dbReference type="ChEBI" id="CHEBI:18420"/>
        <label>2</label>
        <note>catalytic; for RNA-directed RNA polymerase activity</note>
    </ligand>
</feature>
<feature type="binding site" evidence="3">
    <location>
        <position position="2761"/>
    </location>
    <ligand>
        <name>Mg(2+)</name>
        <dbReference type="ChEBI" id="CHEBI:18420"/>
        <label>2</label>
        <note>catalytic; for RNA-directed RNA polymerase activity</note>
    </ligand>
</feature>
<feature type="site" description="Cleavage; by host signal peptide peptidase" evidence="2">
    <location>
        <begin position="177"/>
        <end position="178"/>
    </location>
</feature>
<feature type="site" description="Cleavage; by host signal peptidase" evidence="2">
    <location>
        <begin position="191"/>
        <end position="192"/>
    </location>
</feature>
<feature type="site" description="Cleavage; by host signal peptidase" evidence="2">
    <location>
        <begin position="383"/>
        <end position="384"/>
    </location>
</feature>
<feature type="site" description="Cleavage; by host signal peptidase">
    <location>
        <begin position="750"/>
        <end position="751"/>
    </location>
</feature>
<feature type="site" description="Cleavage; by host signal peptidase">
    <location>
        <begin position="813"/>
        <end position="814"/>
    </location>
</feature>
<feature type="site" description="Cleavage; by protease NS2" evidence="16">
    <location>
        <begin position="1030"/>
        <end position="1031"/>
    </location>
</feature>
<feature type="site" description="Cleavage; by serine protease NS3" evidence="5">
    <location>
        <begin position="1661"/>
        <end position="1662"/>
    </location>
</feature>
<feature type="site" description="Cleavage; by serine protease NS3" evidence="5">
    <location>
        <begin position="1715"/>
        <end position="1716"/>
    </location>
</feature>
<feature type="site" description="Cleavage; by serine protease NS3" evidence="5">
    <location>
        <begin position="1976"/>
        <end position="1977"/>
    </location>
</feature>
<feature type="site" description="Cleavage; by serine protease NS3" evidence="5">
    <location>
        <begin position="2442"/>
        <end position="2443"/>
    </location>
</feature>
<feature type="modified residue" description="N-acetylserine; by host" evidence="10">
    <location>
        <position position="2"/>
    </location>
</feature>
<feature type="modified residue" description="Phosphoserine; by host" evidence="7">
    <location>
        <position position="53"/>
    </location>
</feature>
<feature type="modified residue" description="Phosphoserine; by host" evidence="7">
    <location>
        <position position="99"/>
    </location>
</feature>
<feature type="modified residue" description="Phosphoserine; by host" evidence="7">
    <location>
        <position position="116"/>
    </location>
</feature>
<feature type="modified residue" description="Phosphoserine; by host" evidence="12">
    <location>
        <position position="2198"/>
    </location>
</feature>
<feature type="modified residue" description="Phosphoserine; by host" evidence="12">
    <location>
        <position position="2201"/>
    </location>
</feature>
<feature type="modified residue" description="Phosphoserine; by host" evidence="12">
    <location>
        <position position="2205"/>
    </location>
</feature>
<feature type="modified residue" description="Phosphoserine; by host" evidence="12">
    <location>
        <position position="2208"/>
    </location>
</feature>
<feature type="modified residue" description="Phosphoserine; by host" evidence="11">
    <location>
        <position position="2211"/>
    </location>
</feature>
<feature type="modified residue" description="Phosphoserine; by host" evidence="11">
    <location>
        <position position="2214"/>
    </location>
</feature>
<feature type="modified residue" description="Phosphoserine; by host" evidence="2">
    <location>
        <position position="2471"/>
    </location>
</feature>
<feature type="modified residue" description="Phosphoserine; by host" evidence="2">
    <location>
        <position position="2484"/>
    </location>
</feature>
<feature type="lipid moiety-binding region" description="S-palmitoyl cysteine; by host" evidence="5">
    <location>
        <position position="926"/>
    </location>
</feature>
<feature type="lipid moiety-binding region" description="S-palmitoyl cysteine; by host" evidence="5">
    <location>
        <position position="1976"/>
    </location>
</feature>
<feature type="glycosylation site" description="N-linked (GlcNAc...) asparagine; by host" evidence="5">
    <location>
        <position position="196"/>
    </location>
</feature>
<feature type="glycosylation site" description="N-linked (GlcNAc...) asparagine; by host" evidence="5">
    <location>
        <position position="209"/>
    </location>
</feature>
<feature type="glycosylation site" description="N-linked (GlcNAc...) asparagine; by host" evidence="5">
    <location>
        <position position="234"/>
    </location>
</feature>
<feature type="glycosylation site" description="N-linked (GlcNAc...) asparagine; by host" evidence="5">
    <location>
        <position position="305"/>
    </location>
</feature>
<feature type="glycosylation site" description="N-linked (GlcNAc...) (high mannose) asparagine; by host" evidence="5">
    <location>
        <position position="417"/>
    </location>
</feature>
<feature type="glycosylation site" description="N-linked (GlcNAc...) (high mannose) asparagine; by host" evidence="5">
    <location>
        <position position="423"/>
    </location>
</feature>
<feature type="glycosylation site" description="N-linked (GlcNAc...) (high mannose) asparagine; by host" evidence="5">
    <location>
        <position position="430"/>
    </location>
</feature>
<feature type="glycosylation site" description="N-linked (GlcNAc...) asparagine; by host" evidence="13">
    <location>
        <position position="448"/>
    </location>
</feature>
<feature type="glycosylation site" description="N-linked (GlcNAc...) asparagine; by host" evidence="13">
    <location>
        <position position="477"/>
    </location>
</feature>
<feature type="glycosylation site" description="N-linked (GlcNAc...) asparagine; by host" evidence="13">
    <location>
        <position position="534"/>
    </location>
</feature>
<feature type="glycosylation site" description="N-linked (GlcNAc...) asparagine; by host" evidence="13">
    <location>
        <position position="558"/>
    </location>
</feature>
<feature type="glycosylation site" description="N-linked (GlcNAc...) (high mannose) asparagine; by host" evidence="5">
    <location>
        <position position="627"/>
    </location>
</feature>
<feature type="glycosylation site" description="N-linked (GlcNAc...) (high mannose) asparagine; by host" evidence="5">
    <location>
        <position position="649"/>
    </location>
</feature>
<feature type="disulfide bond" evidence="5">
    <location>
        <begin position="429"/>
        <end position="554"/>
    </location>
</feature>
<feature type="disulfide bond" evidence="5">
    <location>
        <begin position="452"/>
        <end position="459"/>
    </location>
</feature>
<feature type="disulfide bond" evidence="5">
    <location>
        <begin position="488"/>
        <end position="496"/>
    </location>
</feature>
<feature type="disulfide bond" evidence="5">
    <location>
        <begin position="505"/>
        <end position="510"/>
    </location>
</feature>
<feature type="disulfide bond" evidence="5">
    <location>
        <begin position="566"/>
        <end position="571"/>
    </location>
</feature>
<feature type="disulfide bond" evidence="5">
    <location>
        <begin position="585"/>
        <end position="589"/>
    </location>
</feature>
<feature type="disulfide bond" evidence="5">
    <location>
        <begin position="601"/>
        <end position="624"/>
    </location>
</feature>
<feature type="disulfide bond" evidence="5">
    <location>
        <begin position="611"/>
        <end position="648"/>
    </location>
</feature>
<feature type="disulfide bond" evidence="5">
    <location>
        <begin position="656"/>
        <end position="681"/>
    </location>
</feature>
<feature type="cross-link" description="Glycyl lysine isopeptide (Lys-Gly) (interchain with G-Cter in ubiquitin)" evidence="5">
    <location>
        <position position="2350"/>
    </location>
</feature>
<accession>Q9QAX1</accession>
<protein>
    <recommendedName>
        <fullName>Genome polyprotein</fullName>
    </recommendedName>
    <component>
        <recommendedName>
            <fullName>Core protein precursor</fullName>
        </recommendedName>
        <alternativeName>
            <fullName>Capsid protein C</fullName>
        </alternativeName>
        <alternativeName>
            <fullName>p23</fullName>
        </alternativeName>
    </component>
    <component>
        <recommendedName>
            <fullName>Mature core protein</fullName>
        </recommendedName>
        <alternativeName>
            <fullName>p21</fullName>
        </alternativeName>
    </component>
    <component>
        <recommendedName>
            <fullName>Envelope glycoprotein E1</fullName>
        </recommendedName>
        <alternativeName>
            <fullName>gp32</fullName>
        </alternativeName>
        <alternativeName>
            <fullName>gp35</fullName>
        </alternativeName>
    </component>
    <component>
        <recommendedName>
            <fullName>Envelope glycoprotein E2</fullName>
        </recommendedName>
        <alternativeName>
            <fullName>NS1</fullName>
        </alternativeName>
        <alternativeName>
            <fullName>gp68</fullName>
        </alternativeName>
        <alternativeName>
            <fullName>gp70</fullName>
        </alternativeName>
    </component>
    <component>
        <recommendedName>
            <fullName>Viroporin p7</fullName>
        </recommendedName>
    </component>
    <component>
        <recommendedName>
            <fullName>Protease NS2</fullName>
            <shortName>p23</shortName>
            <ecNumber evidence="3">3.4.22.-</ecNumber>
        </recommendedName>
        <alternativeName>
            <fullName>Non-structural protein 2</fullName>
            <shortName>NS2</shortName>
        </alternativeName>
    </component>
    <component>
        <recommendedName>
            <fullName>Serine protease/helicase NS3</fullName>
            <ecNumber evidence="5">3.4.21.98</ecNumber>
            <ecNumber evidence="5">3.6.1.15</ecNumber>
            <ecNumber evidence="5">3.6.4.13</ecNumber>
        </recommendedName>
        <alternativeName>
            <fullName>Hepacivirin</fullName>
        </alternativeName>
        <alternativeName>
            <fullName evidence="5">NS3 helicase</fullName>
        </alternativeName>
        <alternativeName>
            <fullName evidence="5">NS3 protease</fullName>
        </alternativeName>
        <alternativeName>
            <fullName>NS3P</fullName>
        </alternativeName>
        <alternativeName>
            <fullName>Viroporin p70</fullName>
        </alternativeName>
    </component>
    <component>
        <recommendedName>
            <fullName>Non-structural protein 4A</fullName>
            <shortName>NS4A</shortName>
        </recommendedName>
        <alternativeName>
            <fullName>p8</fullName>
        </alternativeName>
    </component>
    <component>
        <recommendedName>
            <fullName>Non-structural protein 4B</fullName>
            <shortName>NS4B</shortName>
        </recommendedName>
        <alternativeName>
            <fullName>p27</fullName>
        </alternativeName>
    </component>
    <component>
        <recommendedName>
            <fullName>Non-structural protein 5A</fullName>
            <shortName>NS5A</shortName>
        </recommendedName>
        <alternativeName>
            <fullName>p56/58</fullName>
        </alternativeName>
    </component>
    <component>
        <recommendedName>
            <fullName>RNA-directed RNA polymerase</fullName>
            <ecNumber evidence="5">2.7.7.48</ecNumber>
        </recommendedName>
        <alternativeName>
            <fullName>NS5B</fullName>
        </alternativeName>
        <alternativeName>
            <fullName>p68</fullName>
        </alternativeName>
    </component>
</protein>
<evidence type="ECO:0000250" key="1">
    <source>
        <dbReference type="UniProtKB" id="O92972"/>
    </source>
</evidence>
<evidence type="ECO:0000250" key="2">
    <source>
        <dbReference type="UniProtKB" id="P26662"/>
    </source>
</evidence>
<evidence type="ECO:0000250" key="3">
    <source>
        <dbReference type="UniProtKB" id="P26663"/>
    </source>
</evidence>
<evidence type="ECO:0000250" key="4">
    <source>
        <dbReference type="UniProtKB" id="P26664"/>
    </source>
</evidence>
<evidence type="ECO:0000250" key="5">
    <source>
        <dbReference type="UniProtKB" id="P27958"/>
    </source>
</evidence>
<evidence type="ECO:0000250" key="6">
    <source>
        <dbReference type="UniProtKB" id="P29846"/>
    </source>
</evidence>
<evidence type="ECO:0000250" key="7">
    <source>
        <dbReference type="UniProtKB" id="Q01403"/>
    </source>
</evidence>
<evidence type="ECO:0000250" key="8">
    <source>
        <dbReference type="UniProtKB" id="Q03463"/>
    </source>
</evidence>
<evidence type="ECO:0000250" key="9">
    <source>
        <dbReference type="UniProtKB" id="Q5EG65"/>
    </source>
</evidence>
<evidence type="ECO:0000250" key="10">
    <source>
        <dbReference type="UniProtKB" id="Q913V3"/>
    </source>
</evidence>
<evidence type="ECO:0000250" key="11">
    <source>
        <dbReference type="UniProtKB" id="Q99IB8"/>
    </source>
</evidence>
<evidence type="ECO:0000250" key="12">
    <source>
        <dbReference type="UniProtKB" id="Q9WMX2"/>
    </source>
</evidence>
<evidence type="ECO:0000255" key="13"/>
<evidence type="ECO:0000255" key="14">
    <source>
        <dbReference type="PROSITE-ProRule" id="PRU00539"/>
    </source>
</evidence>
<evidence type="ECO:0000255" key="15">
    <source>
        <dbReference type="PROSITE-ProRule" id="PRU00541"/>
    </source>
</evidence>
<evidence type="ECO:0000255" key="16">
    <source>
        <dbReference type="PROSITE-ProRule" id="PRU01030"/>
    </source>
</evidence>
<evidence type="ECO:0000255" key="17">
    <source>
        <dbReference type="PROSITE-ProRule" id="PRU01166"/>
    </source>
</evidence>
<evidence type="ECO:0000256" key="18">
    <source>
        <dbReference type="SAM" id="MobiDB-lite"/>
    </source>
</evidence>
<evidence type="ECO:0000305" key="19"/>
<sequence>MSTNPKPQRKTKRNTNRRPQDVKFPGGGQIVGGVYLLPRRGPRLGVRATRKTSERSQPRGRRQPIPKDRRSAGKSWGRPGYPWPLYGNEGLGWAGWLLSPRGSRPSWGPTDPRHRSRNLGKVIDTLTCGFADLMGYIPVVGAPVGGVARALAHGVRVLEDGINYATGNLPGCSFSIFLLALLSCMSVPVSAVEVKNTSQIYMATNDCSNNSITWQLEGAVLHVPGCVPCESTGNISRCWIPVTPNVAVRERGALTKGLRTHIDLIVVSATFCSALYIGDVCGAIMIAAQATIISPQHHTFVQDCNCSIYPGHVTGHRMAWDMMMNWSPATTMIMAYFMRVPEVVLDIITGAHWGVMFGLAYFSMQGAWAKVVVILLLTAGVDAQTHTISGHAARTTHGLVSLFTPGSQQNIQLVNTNGSWHINRTALNCNDSLKTGFIAALFYSHKFNSSGCPQRMSSCRSIEEFRIGWGNLEYEENVTNDDNMRPYCWHYPPRPCGIVPAQTVCGPVYCFTPSPVVVGTTDRRGVPTYTWGENDTDVFLLNSTRPPRGAWFGCTWMNSTGFTKTCGAPPCRIRPDFNSSEDLLCPTDCFRKHSEATYTRCGAGPWLTPKCLFHYPYRLWHYPCTINFTIHKIRMFIGGVEHRLEAACNFTRGDRCNLEDRDRSQLSPLLHSTTEWAILPCTFSDMPALSTGLLHLHQNIVDVQYLYGLSPAITKYIVKWEWVVLLFLLLADARVCACLWMLLLLGQAEAALEKLVILHAASAASSHGMLCFIIFFIAAWYIKGRVTPLVTYSYLGMWSFSLLLLALPQQAYALDTTEQGQIGLVLLVVISVFTLSPAYKILLCRSLWWLSYLLVRAEALIQDWVPPWQARGGRDGIIWAATIFCPGVLFDITNWLLAILGPGYLLRSVLTSTPYFVRAQALLRICAAVRHLSGGKYVQMMLLTLGKWTGTYIYDHLSPMSGWAASGLRDLAVAVEPIVFSPMEKKVIVWGAETAACGDILHGLPVSARLGQEVLLGPADEYTSKGWKLLAPITAYAQQTRGLLGTIVVSMTGRDKTEQAGEIQVLSTVTQSFLGTTISGILWTVFHGAGNKTLAGSRGPVTQMYSSAEGDLVGWPSPPGTRSLDPCTCGAVDLYLVTRNADVIPARRQGDRRGALLSPRPLSSLKGSSGGPVLCPRGHAVGIFRAAICTRGAAKSIDFIPIESLDVIIRSPNFTDNSSPPAVPQTYQVGYLHAPTGSGKSTKVPASYAAQGYKVLVLNPSVAATLGFGAYMSKAHGINPNIRTGVRTVTTGESITYSTYGKFLADGGCSGGAYDVIICDECHSVDATTILGIGTVLDQAETAGARLTVLATATPPGSVTTPHPNIEEVALGHEGEIPFYGKAIPLSQIKGGRHLIFCHSKKKCDELAAALRGMGLNAVAYYRGLDVSVIPTQGDVVVVATDALMTGFTGDFDSVVDCNVAVTQTVDFSLDPTFTVTTQTVPQDAVSRSQRRGRTGRGRLGIYRYVSSGERASGMFDSVVLCECYDAGAAWYELTPAETTVRLRAYFNTPGLPVCQDHLEFWEAVFTGLTHIDAHFLSQTKQAGENFPYLVAYQATVCARAKAPPPSWDVMWKCLIRLKPTLTGPTPLLYRLGPVTNETTLTHPVTKYIATCMQADLEIMTSTWVLAGGVLAAIAAYCLATGCVVCIGRVNINQKTIVAPDKEVLYEAFDEMEECASRALLLEEGQRIAEMLKSKIQGLLQQATKQAQDIQPAVQATWPKLEQFWAKHMWNFISGIQYLAGLSTLPGNPAVAAMMAFSAALTSPLPTSTTILLNIMGGWLASQIAPAAGATGFVVSGLVGAAVGSIGLGKILVDVLAGYGAGISGALVAFKIMSGEKPSVEDVVNLLPGILSPGALVVGVICAAILRRHVGQGEGAVQWMNRLIAFASRGNHVAPTHYVAESDASQRVTQLLGSLTITSLLRRLHTWITEDCPVPCAGSWLRDIWDWACTILTDFKNWLSTKLLPKMPGLPFISCQRGHKGAWTGTGIMTTRCPCGAVVSGNVRHGSMRITGPKTCMNTWQGTFPINCYTEGQCAPQPTHNYKTAIWKVAAAEYAEVTRHGSYAYVTGLTNDNLKVPCQLPAPEFFSWVDGVQIHRFAPTPKPFIRDEVSFTVGLNSFVVGSQLPCEPEPDTEVLASMLTDPSHITAEAAARRLARGSPPSEASSSASQLSAPSLRATCTAHAKNYAVEMVDANFFMGSDVTRIESETKVLILDSLDPSVEEEDEREPSVPSEYLLPKKKFPQALPVWARPDYNPPVVETWKRPDYDPPTVSGCALPPRVTAPTPPPRRRRALVLSQSNVGEALQALAIKSFGQLPPSCDSGRSTGMDTTDATDQPALKESTDSEAGSDSSMPPLEGEPGDPDLESGSVEYHPSSQEGEAAPDLDSGSWSTCSEEGGSEVCCSMSYSWTGALITPCGPEEEKLPINPLSNSLLRYHNKVYSTTSRSASQRAKKVTFDRVQLLDSHYDQVLKDIKLAASKVSANLLSIEEACALTPPHSARSKYGFGAKEVRSLSRKAVDHIKSVWKDLLEDQQTPIPTTIMAKNEVFCIDPTKGGKKAARLIVFPDLGVRVCEKMALYDITQKLPQAVMGASYGFQYSPAQRVDFLLRAWKEKKDPMGFSYDTRCFDSTVTERDIRTEESIYLACSLPEEARVAIHSLTERLYVGGPMMNSKGQSCGYRRCRASGVLTTSMGNTITCYVKALAACKAAGIVAPTMLVCGDDLVVISESQGAEEDERNLRVFTEAMTRYSAPPGDPPKPEYDLELITSCSSNVSVALDQHGRRMYYLTRDPSTPLARAAWETARHSPVNSWLGNIIQYAPTIWVRMVLMTHFFSVLMAQETLDQDLNFEMYGAVYSVNPLDLPAIIERLHGLEAFSLHGYSPTELTRVAAALRKLGAPPLRAWKSRARAVRASLISQGGRAATCGFYLFNWAVRTKRKLTPLPAARRLDLSGWFTVGAGGGDIYHSVSRARPRFLLLCLLLLSVGVGIFLLPAR</sequence>
<organism>
    <name type="scientific">Hepatitis C virus genotype 2k (isolate VAT96)</name>
    <name type="common">HCV</name>
    <dbReference type="NCBI Taxonomy" id="356414"/>
    <lineage>
        <taxon>Viruses</taxon>
        <taxon>Riboviria</taxon>
        <taxon>Orthornavirae</taxon>
        <taxon>Kitrinoviricota</taxon>
        <taxon>Flasuviricetes</taxon>
        <taxon>Amarillovirales</taxon>
        <taxon>Flaviviridae</taxon>
        <taxon>Hepacivirus</taxon>
        <taxon>Hepacivirus hominis</taxon>
    </lineage>
</organism>
<organismHost>
    <name type="scientific">Homo sapiens</name>
    <name type="common">Human</name>
    <dbReference type="NCBI Taxonomy" id="9606"/>
</organismHost>
<proteinExistence type="inferred from homology"/>
<comment type="function">
    <molecule>Mature core protein</molecule>
    <text evidence="2 4 5 6 11 19">Packages viral RNA to form a viral nucleocapsid, and promotes virion budding (Probable). Participates in the viral particle production as a result of its interaction with the non-structural protein 5A (By similarity). Binds RNA and may function as a RNA chaperone to induce the RNA structural rearrangements taking place during virus replication (By similarity). Modulates viral translation initiation by interacting with viral IRES and 40S ribosomal subunit (By similarity). Affects various cell signaling pathways, host immunity and lipid metabolism (Probable). Prevents the establishment of cellular antiviral state by blocking the interferon-alpha/beta (IFN-alpha/beta) and IFN-gamma signaling pathways and by blocking the formation of phosphorylated STAT1 and promoting ubiquitin-mediated proteasome-dependent degradation of STAT1 (By similarity). Activates STAT3 leading to cellular transformation (By similarity). Regulates the activity of cellular genes, including c-myc and c-fos (By similarity). May repress the promoter of p53, and sequester CREB3 and SP110 isoform 3/Sp110b in the cytoplasm (By similarity). Represses cell cycle negative regulating factor CDKN1A, thereby interrupting an important check point of normal cell cycle regulation (By similarity). Targets transcription factors involved in the regulation of inflammatory responses and in the immune response: suppresses TNF-induced NF-kappa-B activation, and activates AP-1 (By similarity). Binds to dendritic cells (DCs) via C1QR1, resulting in down-regulation of T-lymphocytes proliferation (By similarity). Alters lipid metabolism by interacting with hepatocellular proteins involved in lipid accumulation and storage (By similarity). Induces up-regulation of FAS promoter activity, and thereby contributes to the increased triglyceride accumulation in hepatocytes (steatosis) (By similarity).</text>
</comment>
<comment type="function">
    <molecule>Envelope glycoprotein E1</molecule>
    <text evidence="5">Forms a heterodimer with envelope glycoprotein E2, which mediates virus attachment to the host cell, virion internalization through clathrin-dependent endocytosis and fusion with host membrane (By similarity). Fusion with the host cell is most likely mediated by both E1 and E2, through conformational rearrangements of the heterodimer required for fusion rather than a classical class II fusion mechanism (By similarity). E1/E2 heterodimer binds host apolipoproteins such as APOB and ApoE thereby forming a lipo-viro-particle (LVP) (By similarity). APOE associated to the LVP allows the initial virus attachment to cell surface receptors such as the heparan sulfate proteoglycans (HSPGs), syndecan-1 (SDC1), syndecan-1 (SDC2), the low-density lipoprotein receptor (LDLR) and scavenger receptor class B type I (SCARB1) (By similarity). The cholesterol transfer activity of SCARB1 allows E2 exposure and binding of E2 to SCARB1 and the tetraspanin CD81 (By similarity). E1/E2 heterodimer binding on CD81 activates the epithelial growth factor receptor (EGFR) signaling pathway (By similarity). Diffusion of the complex E1-E2-EGFR-SCARB1-CD81 to the cell lateral membrane allows further interaction with Claudin 1 (CLDN1) and occludin (OCLN) to finally trigger HCV entry (By similarity).</text>
</comment>
<comment type="function">
    <molecule>Envelope glycoprotein E2</molecule>
    <text evidence="4 5">Forms a heterodimer with envelope glycoprotein E1, which mediates virus attachment to the host cell, virion internalization through clathrin-dependent endocytosis and fusion with host membrane (By similarity). Fusion with the host cell is most likely mediated by both E1 and E2, through conformational rearrangements of the heterodimer required for fusion rather than a classical class II fusion mechanism (By similarity). The interaction between envelope glycoprotein E2 and host apolipoprotein E/APOE allows the proper assembly, maturation and infectivity of the viral particles (By similarity). This interaction is probably promoted via the up-regulation of cellular autophagy by the virus (By similarity). E1/E2 heterodimer binds host apolipoproteins such as APOB and APOE thereby forming a lipo-viro-particle (LVP) (By similarity). APOE associated to the LVP allows the initial virus attachment to cell surface receptors such as the heparan sulfate proteoglycans (HSPGs), syndecan-1 (SDC1), syndecan-1 (SDC2), the low-density lipoprotein receptor (LDLR) and scavenger receptor class B type I (SCARB1) (By similarity). The cholesterol transfer activity of SCARB1 allows E2 exposure and binding of E2 to SCARB1 and the tetraspanin CD81 (By similarity). E1/E2 heterodimer binding on CD81 activates the epithelial growth factor receptor (EGFR) signaling pathway (By similarity). Diffusion of the complex E1-E2-EGFR-SCARB1-CD81 to the cell lateral membrane allows further interaction with Claudin 1 (CLDN1) and occludin (OCLN) to finally trigger HCV entry (By similarity). Inhibits host EIF2AK2/PKR activation, preventing the establishment of an antiviral state (By similarity). Viral ligand for CD209/DC-SIGN and CLEC4M/DC-SIGNR, which are respectively found on dendritic cells (DCs), and on liver sinusoidal endothelial cells and macrophage-like cells of lymph node sinuses (By similarity). These interactions allow the capture of circulating HCV particles by these cells and subsequent facilitated transmission to permissive cells such as hepatocytes and lymphocyte subpopulations (By similarity). The interaction between E2 and host amino acid transporter complex formed by SLC3A2 and SLC7A5/LAT1 may facilitate viral entry into host cell (By similarity).</text>
</comment>
<comment type="function">
    <molecule>Viroporin p7</molecule>
    <text evidence="5 11 19">Ion channel protein that acts as a viroporin and plays an essential role in the assembly, envelopment and secretion of viral particles (By similarity). Regulates the host cell secretory pathway, which induces the intracellular retention of viral glycoproteins and favors assembly of viral particles (By similarity). Creates a pore in acidic organelles and releases Ca(2+) and H(+) in the cytoplasm of infected cells, leading to a productive viral infection (By similarity). High levels of cytoplasmic Ca(2+) may trigger membrane trafficking and transport of viral ER-associated proteins to viroplasms, sites of viral genome replication (Probable). This ionic imbalance induces the assembly of the inflammasome complex, which triggers the maturation of pro-IL-1beta into IL-1beta through the action of caspase-1 (By similarity). Targets also host mitochondria and induces mitochondrial depolarization (By similarity). In addition of its role as a viroporin, acts as a lipid raft adhesion factor (By similarity).</text>
</comment>
<comment type="function">
    <molecule>Protease NS2</molecule>
    <text evidence="3 5">Cysteine protease required for the proteolytic auto-cleavage between the non-structural proteins NS2 and NS3 (By similarity). The N-terminus of NS3 is required for the function of NS2 protease (active region NS2-3) (By similarity). Promotes the initiation of viral particle assembly by mediating the interaction between structural and non-structural proteins (By similarity).</text>
</comment>
<comment type="function">
    <molecule>Serine protease/helicase NS3</molecule>
    <text evidence="5 12">Displays three enzymatic activities: serine protease with a chymotrypsin-like fold, NTPase and RNA helicase (By similarity). NS3 serine protease, in association with NS4A, is responsible for the cleavages of NS3-NS4A, NS4A-NS4B, NS4B-NS5A and NS5A-NS5B (By similarity). The NS3/NS4A complex prevents phosphorylation of host IRF3, thus preventing the establishment of dsRNA induced antiviral state (By similarity). The NS3/NS4A complex induces host amino acid transporter component SLC3A2, thus contributing to HCV propagation (By similarity). NS3 RNA helicase binds to RNA and unwinds both dsDNA and dsRNA in the 3' to 5' direction, and likely resolves RNA complicated stable secondary structures in the template strand (By similarity). Binds a single ATP and catalyzes the unzipping of a single base pair of dsRNA (By similarity). Inhibits host antiviral proteins TBK1 and IRF3 thereby preventing the establishment of an antiviral state (By similarity). Cleaves host MAVS/CARDIF thereby preventing the establishment of an antiviral state (By similarity). Cleaves host TICAM1/TRIF, thereby disrupting TLR3 signaling and preventing the establishment of an antiviral state (By similarity).</text>
</comment>
<comment type="function">
    <molecule>Non-structural protein 4A</molecule>
    <text evidence="5 12">Peptide cofactor which forms a non-covalent complex with the N-terminal of NS3 serine protease (By similarity). The NS3/NS4A complex prevents phosphorylation of host IRF3, thus preventing the establishment of dsRNA induced antiviral state (By similarity). The NS3/NS4A complex induces host amino acid transporter component SLC3A2, thus contributing to HCV propagation (By similarity).</text>
</comment>
<comment type="function">
    <molecule>Non-structural protein 4B</molecule>
    <text evidence="5">Induces a specific membrane alteration that serves as a scaffold for the virus replication complex (By similarity). This membrane alteration gives rise to the so-called ER-derived membranous web that contains the replication complex (By similarity). NS4B self-interaction contributes to its function in membranous web formation (By similarity). Promotes host TRIF protein degradation in a CASP8-dependent manner thereby inhibiting host TLR3-mediated interferon signaling (By similarity). Disrupts the interaction between STING and TBK1 contributing to the inhibition of interferon signaling (By similarity).</text>
</comment>
<comment type="function">
    <molecule>Non-structural protein 5A</molecule>
    <text evidence="2 4 5 11 12">Phosphorylated protein that is indispensable for viral replication and assembly (By similarity). Both hypo- and hyperphosphorylated states are required for the viral life cycle (By similarity). The hyperphosphorylated form of NS5A is an inhibitor of viral replication (By similarity). Involved in RNA-binding and especially in binding to the viral genome (By similarity). Zinc is essential for RNA-binding (By similarity). Participates in the viral particle production as a result of its interaction with the mature viral core protein (By similarity). Its interaction with host VAPB may target the viral replication complex to vesicles (By similarity). Down-regulates viral IRES translation initiation (By similarity). Mediates interferon resistance, presumably by interacting with and inhibiting host EIF2AK2/PKR (By similarity). Prevents BIN1-induced apoptosis (By similarity). Acts as a transcriptional activator of some host genes important for viral replication when localized in the nucleus (By similarity). Via the interaction with host PACSIN2, modulates lipid droplet formation in order to promote virion assembly (By similarity). Modulates TNFRSF21/DR6 signaling pathway for viral propagation (By similarity).</text>
</comment>
<comment type="function">
    <molecule>RNA-directed RNA polymerase</molecule>
    <text evidence="5">RNA-dependent RNA polymerase that performs primer-template recognition and RNA synthesis during viral replication. Initiates RNA transcription/replication at a flavin adenine dinucleotide (FAD), resulting in a 5'- FAD cap on viral RNAs. In this way, recognition of viral 5' RNA by host pattern recognition receptors can be bypassed, thereby evading activation of antiviral pathways.</text>
</comment>
<comment type="catalytic activity">
    <molecule>Serine protease/helicase NS3</molecule>
    <reaction evidence="5">
        <text>Hydrolysis of four peptide bonds in the viral precursor polyprotein, commonly with Asp or Glu in the P6 position, Cys or Thr in P1 and Ser or Ala in P1'.</text>
        <dbReference type="EC" id="3.4.21.98"/>
    </reaction>
</comment>
<comment type="catalytic activity">
    <molecule>Serine protease/helicase NS3</molecule>
    <reaction evidence="5">
        <text>a ribonucleoside 5'-triphosphate + H2O = a ribonucleoside 5'-diphosphate + phosphate + H(+)</text>
        <dbReference type="Rhea" id="RHEA:23680"/>
        <dbReference type="ChEBI" id="CHEBI:15377"/>
        <dbReference type="ChEBI" id="CHEBI:15378"/>
        <dbReference type="ChEBI" id="CHEBI:43474"/>
        <dbReference type="ChEBI" id="CHEBI:57930"/>
        <dbReference type="ChEBI" id="CHEBI:61557"/>
        <dbReference type="EC" id="3.6.1.15"/>
    </reaction>
</comment>
<comment type="catalytic activity">
    <molecule>Serine protease/helicase NS3</molecule>
    <reaction evidence="5">
        <text>ATP + H2O = ADP + phosphate + H(+)</text>
        <dbReference type="Rhea" id="RHEA:13065"/>
        <dbReference type="ChEBI" id="CHEBI:15377"/>
        <dbReference type="ChEBI" id="CHEBI:15378"/>
        <dbReference type="ChEBI" id="CHEBI:30616"/>
        <dbReference type="ChEBI" id="CHEBI:43474"/>
        <dbReference type="ChEBI" id="CHEBI:456216"/>
        <dbReference type="EC" id="3.6.4.13"/>
    </reaction>
</comment>
<comment type="catalytic activity">
    <molecule>RNA-directed RNA polymerase</molecule>
    <reaction evidence="14">
        <text>RNA(n) + a ribonucleoside 5'-triphosphate = RNA(n+1) + diphosphate</text>
        <dbReference type="Rhea" id="RHEA:21248"/>
        <dbReference type="Rhea" id="RHEA-COMP:14527"/>
        <dbReference type="Rhea" id="RHEA-COMP:17342"/>
        <dbReference type="ChEBI" id="CHEBI:33019"/>
        <dbReference type="ChEBI" id="CHEBI:61557"/>
        <dbReference type="ChEBI" id="CHEBI:140395"/>
        <dbReference type="EC" id="2.7.7.48"/>
    </reaction>
</comment>
<comment type="cofactor">
    <molecule>Protease NS2</molecule>
    <cofactor evidence="3">
        <name>Zn(2+)</name>
        <dbReference type="ChEBI" id="CHEBI:29105"/>
    </cofactor>
    <text evidence="3">Activity of protease NS2 is dependent on zinc ions and completely inhibited by EDTA. This is probably due to the fact that NS2 protease activity needs NS3 N-terminus that binds a zinc atom (active region NS2-3).</text>
</comment>
<comment type="cofactor">
    <molecule>Serine protease/helicase NS3</molecule>
    <cofactor evidence="3">
        <name>Zn(2+)</name>
        <dbReference type="ChEBI" id="CHEBI:29105"/>
    </cofactor>
    <cofactor evidence="12">
        <name>Mg(2+)</name>
        <dbReference type="ChEBI" id="CHEBI:18420"/>
    </cofactor>
    <text evidence="3 12">Binds 1 zinc ion, which has a structural role (By similarity). The magnesium ion is essential for the helicase activity (By similarity).</text>
</comment>
<comment type="cofactor">
    <molecule>RNA-directed RNA polymerase</molecule>
    <cofactor evidence="3">
        <name>Mg(2+)</name>
        <dbReference type="ChEBI" id="CHEBI:18420"/>
    </cofactor>
    <text evidence="3">Binds 2 magnesium ion that constitute a dinuclear catalytic metal center.</text>
</comment>
<comment type="activity regulation">
    <molecule>Viroporin p7</molecule>
    <text evidence="2 5">Inhibited by the antiviral drug hexamethylene amiloride (By similarity). Inhibition by amantadine appears to be genotype-dependent (By similarity). Also inhibited by long-alkyl-chain iminosugar derivatives (By similarity).</text>
</comment>
<comment type="activity regulation">
    <molecule>RNA-directed RNA polymerase</molecule>
    <text evidence="5">Activity is up-regulated by PRK2/PKN2-mediated phosphorylation.</text>
</comment>
<comment type="subunit">
    <molecule>Mature core protein</molecule>
    <text evidence="2 4 5 6 8 9 11">Homooligomer (By similarity). Interacts with E1 (via C-terminus) (By similarity). Interacts with the non-structural protein 5A (By similarity). Interacts (via N-terminus) with host STAT1 (via SH2 domain); this interaction results in decreased STAT1 phosphorylation and ubiquitin-mediated proteasome-dependent STAT1 degradation, leading to decreased IFN-stimulated gene transcription (By similarity). Interacts with host STAT3; this interaction constitutively activates STAT3 (By similarity). Interacts with host LTBR receptor (By similarity). Interacts with host TNFRSF1A receptor and possibly induces apoptosis (By similarity). Interacts with host HNRPK (By similarity). Interacts with host YWHAE (By similarity). Interacts with host UBE3A/E6AP (By similarity). Interacts with host DDX3X (By similarity). Interacts with host APOA2 (By similarity). Interacts with host RXRA protein (By similarity). Interacts with host SP110 isoform 3/Sp110b; this interaction sequesters the transcriptional corepressor SP110 away from the nucleus (By similarity). Interacts with host CREB3 nuclear transcription protein; this interaction triggers cell transformation (By similarity). Interacts with host ACY3 (By similarity). Interacts with host C1QR1 (By similarity). Interacts with host RBM24; this interaction, which enhances the interaction of the mature core protein with 5'-UTR, may inhibit viral translation and favor replication (By similarity). Interacts with host EIF2AK2/PKR; this interaction induces the autophosphorylation of EIF2AK2 (By similarity). Part of the viral assembly initiation complex composed of NS2, E1, E2, NS3, NS4A, NS5A and the mature core protein (By similarity).</text>
</comment>
<comment type="subunit">
    <molecule>Envelope glycoprotein E1</molecule>
    <text evidence="5 11">Forms a heterodimer with envelope glycoprotein E2 (By similarity). Interacts with mature core protein (By similarity). Interacts with protease NS2 (By similarity). The heterodimer E1/E2 interacts with host CLDN1; this interaction plays a role in viral entry into host cell (By similarity). Interacts with host SPSB2 (via C-terminus) (By similarity). Part of the viral assembly initiation complex composed of NS2, E1, E2, NS3, NS4A, NS5A and the mature core protein (By similarity). Interacts with host NEURL3; this interaction prevents E1 binding to glycoprotein E2 (By similarity).</text>
</comment>
<comment type="subunit">
    <molecule>Envelope glycoprotein E2</molecule>
    <text evidence="5 11 12">Forms a heterodimer with envelope glycoprotein E1 (By similarity). Interacts with host CD81 and SCARB1 receptors; these interactions play a role in viral entry into host cell (By similarity). Interacts with host EIF2AK2/PKR; this interaction inhibits EIF2AK2 and probably allows the virus to evade the innate immune response (By similarity). Interacts with host CD209/DC-SIGN and CLEC4M/DC-SIGNR (By similarity). Interact with host SPCS1; this interaction is essential for viral particle assembly (By similarity). Interacts with protease NS2 (By similarity). The heterodimer E1/E2 interacts with host CLDN1; this interaction plays a role in viral entry into host cell (By similarity). Part of the viral assembly initiation complex composed of NS2, E1, E2, NS3, NS4A, NS5A and the mature core protein (By similarity). Interacts with host SLC3A2/4F2hc; the interaction may facilitate viral entry into host cell (By similarity). Interacts with human PLSCR1 (By similarity).</text>
</comment>
<comment type="subunit">
    <molecule>Viroporin p7</molecule>
    <text evidence="1 5 11">Homohexamer (By similarity). Homoheptamer (By similarity). Interacts with protease NS2 (By similarity).</text>
</comment>
<comment type="subunit">
    <molecule>Protease NS2</molecule>
    <text evidence="5 11">Homodimer (By similarity). Interacts with host SPCS1; this interaction is essential for viral particle assembly (By similarity). Interacts with envelope glycoprotein E1 (By similarity). Interacts with envelope glycoprotein E2 (By similarity). Interacts with viroporin p7 (By similarity). Interacts with serine protease/helicase NS3 (By similarity). Part of the replication complex composed of NS2, NS3, NS4A, NS4B, NS5A and the RNA-directed RNA polymerase embedded in an ER-derived membranous web (By similarity). Part of the viral assembly initiation complex composed of NS2, E1, E2, NS3, NS4A, NS5A and the mature core protein (By similarity).</text>
</comment>
<comment type="subunit">
    <molecule>Serine protease/helicase NS3</molecule>
    <text evidence="3 5 11 12">Interacts with protease NS2 (By similarity). Interacts with non-structural protein 4A; this interaction stabilizes the folding of NS3 serine protease (By similarity). NS3-NS4A interaction is essential for NS3 activation and allows membrane anchorage of the latter (By similarity). NS3/NS4A complex also prevents phosphorylation of host IRF3, thus preventing the establishment of dsRNA induced antiviral state (By similarity). Interacts with host MAVS; this interaction leads to the cleavage and inhibition of host MAVS (By similarity). Interacts with host TICAM1; this interaction leads to the cleavage and inhibition of host TICAM1 (By similarity). Interacts with host TANK-binding kinase/TBK1; this interaction results in the inhibition of the association between TBK1 and IRF3, which leads to the inhibition of IRF3 activation (By similarity). Interacts with host RBM24 (By similarity). Part of the replication complex composed of NS2, NS3, NS4A, NS4B, NS5A and the RNA-directed RNA polymerase embedded in an ER-derived membranous web (By similarity). Part of the viral assembly initiation complex composed of NS2, E1, E2, NS3, NS4A, NS5A and the mature core protein (By similarity).</text>
</comment>
<comment type="subunit">
    <molecule>Non-structural protein 4A</molecule>
    <text evidence="2 3 5 11">Interacts with NS3 serine protease; this interaction stabilizes the folding of NS3 serine protease (By similarity). NS3-NS4A interaction is essential for NS3 activation and allows membrane anchorage of the latter (By similarity). Interacts with non-structural protein 5A (via N-terminus) (By similarity). Part of the replication complex composed of NS2, NS3, NS4A, NS4B, NS5A and the RNA-directed RNA polymerase embedded in an ER-derived membranous web (By similarity). Part of the viral assembly initiation complex composed of NS2, E1, E2, NS3, NS4A, NS5A and the mature core protein (By similarity).</text>
</comment>
<comment type="subunit">
    <molecule>Non-structural protein 4B</molecule>
    <text evidence="5 11">Homomultimer (By similarity). Interacts with non-structural protein NS5A (By similarity). Interacts with host PLA2G4C; this interaction likely initiates the recruitment of replication complexes to lipid droplets (By similarity). Interacts with host STING; this interaction disrupts the interaction between STING and TBK1 thereby suppressing the interferon signaling (By similarity). Part of the replication complex composed of NS2, NS3, NS4A, NS4B, NS5A and the RNA-directed RNA polymerase embedded in an ER-derived membranous web (By similarity).</text>
</comment>
<comment type="subunit">
    <molecule>Non-structural protein 5A</molecule>
    <text evidence="2 3 4 5 11">Monomer. Homodimer; dimerization is required for RNA-binding (By similarity). Interacts with the mature core protein (By similarity). Interacts (via N-terminus) with non-structural protein 4A (By similarity). Interacts with non-structural protein 4B. Interacts (via region D2) with RNA-directed RNA polymerase (By similarity). Part of the viral assembly initiation complex composed of NS2, E1, E2, NS3, NS4A, NS5A and the mature core protein (By similarity). Part of the replication complex composed of NS2, NS3, NS4A, NS4B, NS5A and the RNA-directed RNA polymerase embedded in an ER-derived membranous web (By similarity). Interacts with host GRB2 (By similarity). Interacts with host BIN1 (By similarity). Interacts with host PIK3R1 (By similarity). Interacts with host SRCAP (By similarity). Interacts with host FKBP8 (By similarity). Interacts (via C-terminus) with host VAPB (via MSP domain). Interacts with host EIF2AK2/PKR; this interaction leads to disruption of EIF2AK2 dimerization by NS5A and probably allows the virus to evade the innate immune response. Interacts (via N-terminus) with host PACSIN2 (via N-terminus); this interaction attenuates protein kinase C alpha-mediated phosphorylation of PACSIN2 by disrupting the interaction between PACSIN2 and PRKCA (By similarity). Interacts (via N-terminus) with host SRC kinase (via SH2 domain) (By similarity). Interacts with most Src-family kinases (By similarity). Interacts with host IFI27 and SKP2; promotes the ubiquitin-mediated proteasomal degradation of NS5A (By similarity). Interacts with host GPS2 (By similarity). Interacts with host TNFRSF21; this interaction allows the modulation by the virus of JNK, p38 MAPK, STAT3, and Akt signaling pathways in a DR6-dependent manner. Interacts (via N-terminus) with host CIDEB (via N-terminus); this interaction seems to regulate the association of HCV particles with APOE (By similarity). Interacts with host CHKA/Choline Kinase-alpha; CHKA bridges host PI4KA and NS5A and potentiates NS5A-stimulated PI4KA activity, which then facilitates the targeting of the ternary complex to the ER for viral replication (By similarity). Interacts with host SPSB2 (via C-terminus); this interaction targets NS5A for ubiquitination and degradation (By similarity). Interacts with host RAB18; this interaction may promote the association of NS5A and other replicase components with lipid droplets (By similarity). Interacts (via region D2) with host PPIA/CYPA; the interaction stimulates RNA-binding ability of NS5A and is dependent on the peptidyl-prolyl cis-trans isomerase activity of PPIA/CYPA. Interacts with host TRIM14; this interaction induces the degradation of NS5A (By similarity).</text>
</comment>
<comment type="subunit">
    <molecule>RNA-directed RNA polymerase</molecule>
    <text evidence="5">Homooligomer (By similarity). Interacts with non-structural protein 5A (By similarity). Interacts with host VAPB (By similarity). Interacts with host PRK2/PKN2 (By similarity). Interacts with host HNRNPA1 and SEPT6; these interactions facilitate viral replication (By similarity). Part of the replication complex composed of NS2, NS3, NS4A, NS4B, NS5A and the RNA-directed RNA polymerase (By similarity).</text>
</comment>
<comment type="subcellular location">
    <molecule>Core protein precursor</molecule>
    <subcellularLocation>
        <location evidence="4">Host endoplasmic reticulum membrane</location>
        <topology evidence="13">Single-pass membrane protein</topology>
    </subcellularLocation>
    <subcellularLocation>
        <location evidence="4">Host mitochondrion membrane</location>
        <topology evidence="13">Single-pass type I membrane protein</topology>
    </subcellularLocation>
    <text>The C-terminal transmembrane domain of the core protein precursor contains an ER signal leading the nascent polyprotein to the ER membrane.</text>
</comment>
<comment type="subcellular location">
    <molecule>Mature core protein</molecule>
    <subcellularLocation>
        <location evidence="11">Virion</location>
    </subcellularLocation>
    <subcellularLocation>
        <location evidence="11">Host cytoplasm</location>
    </subcellularLocation>
    <subcellularLocation>
        <location evidence="2">Host nucleus</location>
    </subcellularLocation>
    <subcellularLocation>
        <location evidence="11">Host lipid droplet</location>
    </subcellularLocation>
    <text evidence="5">Only a minor proportion of core protein is present in the nucleus (By similarity). Probably present on the surface of lipid droplets (By similarity).</text>
</comment>
<comment type="subcellular location">
    <molecule>Envelope glycoprotein E1</molecule>
    <subcellularLocation>
        <location evidence="19">Virion membrane</location>
        <topology evidence="19">Single-pass type I membrane protein</topology>
    </subcellularLocation>
    <subcellularLocation>
        <location>Host endoplasmic reticulum membrane</location>
        <topology evidence="5">Single-pass type I membrane protein</topology>
    </subcellularLocation>
    <text evidence="5">The C-terminal transmembrane domain acts as a signal sequence and forms a hairpin structure before cleavage by host signal peptidase (By similarity). After cleavage, the membrane sequence is retained at the C-terminus of the protein, serving as ER membrane anchor (By similarity). A reorientation of the second hydrophobic stretch occurs after cleavage producing a single reoriented transmembrane domain (By similarity). These events explain the final topology of the protein (By similarity).</text>
</comment>
<comment type="subcellular location">
    <molecule>Envelope glycoprotein E2</molecule>
    <subcellularLocation>
        <location evidence="19">Virion membrane</location>
        <topology evidence="19">Single-pass type I membrane protein</topology>
    </subcellularLocation>
    <subcellularLocation>
        <location>Host endoplasmic reticulum membrane</location>
        <topology evidence="5">Single-pass type I membrane protein</topology>
    </subcellularLocation>
    <subcellularLocation>
        <location evidence="12">Host lipid droplet</location>
    </subcellularLocation>
    <text evidence="5">The C-terminal transmembrane domain acts as a signal sequence and forms a hairpin structure before cleavage by host signal peptidase (By similarity). After cleavage, the membrane sequence is retained at the C-terminus of the protein, serving as ER membrane anchor (By similarity). A reorientation of the second hydrophobic stretch occurs after cleavage producing a single reoriented transmembrane domain (By similarity). These events explain the final topology of the protein (By similarity).</text>
</comment>
<comment type="subcellular location">
    <molecule>Viroporin p7</molecule>
    <subcellularLocation>
        <location evidence="5">Host endoplasmic reticulum membrane</location>
        <topology evidence="5">Multi-pass membrane protein</topology>
    </subcellularLocation>
    <subcellularLocation>
        <location evidence="5">Host mitochondrion</location>
    </subcellularLocation>
    <subcellularLocation>
        <location evidence="5">Host cell membrane</location>
    </subcellularLocation>
    <text evidence="5">The C-terminus of p7 membrane domain acts as a signal sequence (By similarity). After cleavage by host signal peptidase, the membrane sequence is retained at the C-terminus of the protein, serving as ER membrane anchor (By similarity). ER retention of p7 is leaky and a small fraction reaches the plasma membrane (By similarity).</text>
</comment>
<comment type="subcellular location">
    <molecule>Protease NS2</molecule>
    <subcellularLocation>
        <location evidence="5">Host endoplasmic reticulum membrane</location>
        <topology evidence="5">Multi-pass membrane protein</topology>
    </subcellularLocation>
    <subcellularLocation>
        <location evidence="12">Host lipid droplet</location>
    </subcellularLocation>
    <text evidence="11">Probably present on the surface of lipid droplets.</text>
</comment>
<comment type="subcellular location">
    <molecule>Serine protease/helicase NS3</molecule>
    <subcellularLocation>
        <location evidence="19">Host endoplasmic reticulum membrane</location>
        <topology evidence="19">Peripheral membrane protein</topology>
    </subcellularLocation>
    <text evidence="19">NS3 is associated to the ER membrane through its binding to NS4A.</text>
</comment>
<comment type="subcellular location">
    <molecule>Non-structural protein 4A</molecule>
    <subcellularLocation>
        <location evidence="19">Host endoplasmic reticulum membrane</location>
        <topology evidence="19">Single-pass type I membrane protein</topology>
    </subcellularLocation>
    <text>Host membrane insertion occurs after processing by the NS3 protease.</text>
</comment>
<comment type="subcellular location">
    <molecule>Non-structural protein 4B</molecule>
    <subcellularLocation>
        <location evidence="5">Host endoplasmic reticulum membrane</location>
        <topology evidence="5">Multi-pass membrane protein</topology>
    </subcellularLocation>
    <text evidence="5">A reorientation of the N-terminus into the ER lumen occurs post-translationally.</text>
</comment>
<comment type="subcellular location">
    <molecule>Non-structural protein 5A</molecule>
    <subcellularLocation>
        <location evidence="5">Host endoplasmic reticulum membrane</location>
        <topology evidence="5">Peripheral membrane protein</topology>
    </subcellularLocation>
    <subcellularLocation>
        <location evidence="5">Host cytoplasm</location>
        <location evidence="5">Host perinuclear region</location>
    </subcellularLocation>
    <subcellularLocation>
        <location evidence="2">Host mitochondrion</location>
    </subcellularLocation>
    <subcellularLocation>
        <location evidence="5">Host cytoplasm</location>
    </subcellularLocation>
    <subcellularLocation>
        <location evidence="2">Host nucleus</location>
    </subcellularLocation>
    <subcellularLocation>
        <location evidence="12">Host lipid droplet</location>
    </subcellularLocation>
    <text evidence="2 5">Host membrane insertion occurs after processing by the NS3 protease (By similarity). Localizes at the surface of lipid droplets (By similarity).</text>
</comment>
<comment type="subcellular location">
    <molecule>RNA-directed RNA polymerase</molecule>
    <subcellularLocation>
        <location evidence="5">Host cytoplasm</location>
    </subcellularLocation>
    <subcellularLocation>
        <location>Host endoplasmic reticulum membrane</location>
        <topology evidence="5">Single-pass type IV membrane protein</topology>
    </subcellularLocation>
    <text evidence="5">Host membrane insertion occurs after processing by the NS3 protease.</text>
</comment>
<comment type="domain">
    <molecule>Envelope glycoprotein E1</molecule>
    <text evidence="5">The transmembrane regions of envelope E1 and E2 glycoproteins are involved in heterodimer formation, ER localization, and assembly of these proteins.</text>
</comment>
<comment type="domain">
    <molecule>Envelope glycoprotein E2</molecule>
    <text evidence="3 5">The transmembrane regions of envelope E1 and E2 glycoproteins are involved in heterodimer formation, ER localization, and assembly of these proteins (By similarity). Envelope E2 glycoprotein contain two highly variable regions called hypervariable region 1 and 2 (HVR1 and HVR2) (By similarity). E2 also contain two segments involved in CD81-binding (By similarity). HVR1 is implicated in the SCARB1-mediated cell entry and probably acts as a regulator of the association of particles with lipids (By similarity).</text>
</comment>
<comment type="domain">
    <molecule>Protease NS2</molecule>
    <text evidence="3">The N-terminus of NS3 is required for the catalytic activity of protease NS2 (By similarity). The minimal catalytic region includes the C-terminus of NS2 and the N-terminus NS3 protease domain (active region NS2-3) (By similarity).</text>
</comment>
<comment type="domain">
    <molecule>Serine protease/helicase NS3</molecule>
    <text evidence="2 5">The N-terminal one-third contains the protease activity (By similarity). This region contains a zinc atom that does not belong to the active site, but may play a structural rather than a catalytic role (By similarity). This region is essential for the activity of protease NS2, maybe by contributing to the folding of the latter (By similarity). The NTPase/helicase activity is located in the twothirds C-terminus of NS3, this domain contains the NTPase and RNA-binding regions (By similarity).</text>
</comment>
<comment type="domain">
    <molecule>Non-structural protein 4B</molecule>
    <text evidence="11">Contains a glycine zipper region that critically contributes to the biogenesis of functional ER-derived replication organelles.</text>
</comment>
<comment type="domain">
    <molecule>Non-structural protein 5A</molecule>
    <text evidence="2 5">The N-terminus of NS5A acts as membrane anchor (By similarity). The central part of NS5A contains a variable region called interferon sensitivity determining region (ISDR) and seems to be intrinsically disordered and interacts with NS5B and host EIF2AK2 (By similarity). The C-terminus of NS5A contains a variable region called variable region 3 (V3) (By similarity). ISDR and V3 may be involved in sensitivity and/or resistance to IFN-alpha therapy (By similarity). The C-terminus contains a nuclear localization signal (By similarity). The SH3-binding domain is involved in the interaction with host BIN1, GRB2 and Src-family kinases (By similarity).</text>
</comment>
<comment type="PTM">
    <molecule>Genome polyprotein</molecule>
    <text evidence="4 5">Specific enzymatic cleavages in vivo yield mature proteins (By similarity). The structural proteins, core, E1, E2 and p7 are produced by proteolytic processing by host signal peptidases (By similarity). The core protein precursor is synthesized as a 23 kDa, which is retained in the ER membrane through the hydrophobic signal peptide (By similarity). Cleavage by the signal peptidase releases the 21 kDa mature core protein (By similarity). The cleavage of the core protein precursor occurs between aminoacids 176 and 188 but the exact cleavage site is not known (By similarity). Some degraded forms of the core protein appear as well during the course of infection (By similarity). The other proteins (p7, NS2, NS3, NS4A, NS4B, NS5A and NS5B) are cleaved by the viral proteases (By similarity). Autoprocessing between NS2 and NS3 is mediated by the NS2 cysteine protease catalytic domain and regulated by the NS3 N-terminal domain (By similarity).</text>
</comment>
<comment type="PTM">
    <molecule>Mature core protein</molecule>
    <text evidence="7">Phosphorylated by host PKC and PKA.</text>
</comment>
<comment type="PTM">
    <molecule>Mature core protein</molecule>
    <text evidence="8">Ubiquitinated; mediated by UBE3A and leading to core protein subsequent proteasomal degradation.</text>
</comment>
<comment type="PTM">
    <molecule>Envelope glycoprotein E1</molecule>
    <text evidence="5">Highly N-glycosylated.</text>
</comment>
<comment type="PTM">
    <molecule>Envelope glycoprotein E2</molecule>
    <text evidence="5">Highly N-glycosylated.</text>
</comment>
<comment type="PTM">
    <molecule>Protease NS2</molecule>
    <text evidence="5">Palmitoylation is required for NS2/3 autoprocessing and E2 recruitment to membranes.</text>
</comment>
<comment type="PTM">
    <molecule>Non-structural protein 4B</molecule>
    <text evidence="5">Palmitoylated. This modification may play a role in its polymerization or in protein-protein interactions.</text>
</comment>
<comment type="PTM">
    <molecule>Non-structural protein 5A</molecule>
    <text evidence="2 4">Phosphorylated on serines in a basal form termed p56 (By similarity). p58 is a hyperphosphorylated form of p56 (By similarity). p56 and p58 coexist in the cell in roughly equivalent amounts (By similarity). Hyperphosphorylation is dependent on the presence of NS4A (By similarity). Host CSNK1A1/CKI-alpha or RPS6KB1 kinases may be responsible for NS5A phosphorylation (By similarity).</text>
</comment>
<comment type="PTM">
    <molecule>Non-structural protein 5A</molecule>
    <text evidence="11">Tyrosine phosphorylation is essential for the interaction with host SRC.</text>
</comment>
<comment type="PTM">
    <molecule>Non-structural protein 5A</molecule>
    <text evidence="5">Ubiquitinated (By similarity). Ubiquitination, most probably at Lys-2350, mediated by host IFI27 and SKP2 leads to proteasomal degradation, restricting viral infection (By similarity). Ubiquitination by host TRIM22 leads to interruption of viral replication (By similarity).</text>
</comment>
<comment type="PTM">
    <molecule>RNA-directed RNA polymerase</molecule>
    <text evidence="2">The N-terminus is phosphorylated by host PRK2/PKN2.</text>
</comment>
<comment type="miscellaneous">
    <text evidence="19">Viral particle assembly takes place at the surface of ER-derived membranes in close proximity to lipid droplets. NS2 associates with E1/E2 glycoproteins, NS3 and NS5A, which interacts with the viral RNA and core protein to promote genome encapsidation. The nucleocapsid buds at the ER membrane where E1/E2 glycoproteins are anchored and afterward associate with nascent lipid droplet to acquire APOE and APOC. Secretion of viral particles is probably regulated by viroporin p7.</text>
</comment>
<comment type="miscellaneous">
    <molecule>Non-structural protein 5A</molecule>
    <text evidence="19">Cell culture adaptation of the virus leads to mutations in NS5A, reducing its inhibitory effect on replication.</text>
</comment>
<comment type="miscellaneous">
    <molecule>Mature core protein</molecule>
    <text evidence="2">Exerts viral interference on hepatitis B virus when HCV and HBV coinfect the same cell, by suppressing HBV gene expression, RNA encapsidation and budding.</text>
</comment>
<comment type="similarity">
    <text evidence="19">Belongs to the hepacivirus polyprotein family.</text>
</comment>
<comment type="caution">
    <text evidence="19">The core gene probably also codes for alternative reading frame proteins (ARFPs). Many functions depicted for the core protein might belong to the ARFPs.</text>
</comment>
<keyword id="KW-0007">Acetylation</keyword>
<keyword id="KW-1072">Activation of host autophagy by virus</keyword>
<keyword id="KW-0053">Apoptosis</keyword>
<keyword id="KW-0067">ATP-binding</keyword>
<keyword id="KW-0167">Capsid protein</keyword>
<keyword id="KW-1165">Clathrin-mediated endocytosis of virus by host</keyword>
<keyword id="KW-1015">Disulfide bond</keyword>
<keyword id="KW-1170">Fusion of virus membrane with host endosomal membrane</keyword>
<keyword id="KW-1168">Fusion of virus membrane with host membrane</keyword>
<keyword id="KW-1078">G1/S host cell cycle checkpoint dysregulation by virus</keyword>
<keyword id="KW-0325">Glycoprotein</keyword>
<keyword id="KW-0347">Helicase</keyword>
<keyword id="KW-1032">Host cell membrane</keyword>
<keyword id="KW-1035">Host cytoplasm</keyword>
<keyword id="KW-1038">Host endoplasmic reticulum</keyword>
<keyword id="KW-1041">Host lipid droplet</keyword>
<keyword id="KW-1043">Host membrane</keyword>
<keyword id="KW-1045">Host mitochondrion</keyword>
<keyword id="KW-1048">Host nucleus</keyword>
<keyword id="KW-0945">Host-virus interaction</keyword>
<keyword id="KW-0378">Hydrolase</keyword>
<keyword id="KW-1090">Inhibition of host innate immune response by virus</keyword>
<keyword id="KW-1114">Inhibition of host interferon signaling pathway by virus</keyword>
<keyword id="KW-1097">Inhibition of host MAVS by virus</keyword>
<keyword id="KW-1113">Inhibition of host RLR pathway by virus</keyword>
<keyword id="KW-1105">Inhibition of host STAT1 by virus</keyword>
<keyword id="KW-1110">Inhibition of host TRAFs by virus</keyword>
<keyword id="KW-0922">Interferon antiviral system evasion</keyword>
<keyword id="KW-0407">Ion channel</keyword>
<keyword id="KW-0406">Ion transport</keyword>
<keyword id="KW-1017">Isopeptide bond</keyword>
<keyword id="KW-0449">Lipoprotein</keyword>
<keyword id="KW-0460">Magnesium</keyword>
<keyword id="KW-0472">Membrane</keyword>
<keyword id="KW-0479">Metal-binding</keyword>
<keyword id="KW-1121">Modulation of host cell cycle by virus</keyword>
<keyword id="KW-0511">Multifunctional enzyme</keyword>
<keyword id="KW-0547">Nucleotide-binding</keyword>
<keyword id="KW-0548">Nucleotidyltransferase</keyword>
<keyword id="KW-0553">Oncogene</keyword>
<keyword id="KW-0564">Palmitate</keyword>
<keyword id="KW-0597">Phosphoprotein</keyword>
<keyword id="KW-0645">Protease</keyword>
<keyword id="KW-0687">Ribonucleoprotein</keyword>
<keyword id="KW-0694">RNA-binding</keyword>
<keyword id="KW-0696">RNA-directed RNA polymerase</keyword>
<keyword id="KW-0720">Serine protease</keyword>
<keyword id="KW-0729">SH3-binding</keyword>
<keyword id="KW-0788">Thiol protease</keyword>
<keyword id="KW-0804">Transcription</keyword>
<keyword id="KW-0805">Transcription regulation</keyword>
<keyword id="KW-0808">Transferase</keyword>
<keyword id="KW-0812">Transmembrane</keyword>
<keyword id="KW-1133">Transmembrane helix</keyword>
<keyword id="KW-0813">Transport</keyword>
<keyword id="KW-0832">Ubl conjugation</keyword>
<keyword id="KW-1161">Viral attachment to host cell</keyword>
<keyword id="KW-0261">Viral envelope protein</keyword>
<keyword id="KW-0899">Viral immunoevasion</keyword>
<keyword id="KW-1182">Viral ion channel</keyword>
<keyword id="KW-0543">Viral nucleoprotein</keyword>
<keyword id="KW-1162">Viral penetration into host cytoplasm</keyword>
<keyword id="KW-0693">Viral RNA replication</keyword>
<keyword id="KW-0946">Virion</keyword>
<keyword id="KW-1164">Virus endocytosis by host</keyword>
<keyword id="KW-1160">Virus entry into host cell</keyword>
<keyword id="KW-0862">Zinc</keyword>
<reference key="1">
    <citation type="journal article" date="2000" name="Virus Genes">
        <title>Full-genome nucleotide sequence of a hepatitis C virus variant (isolate name VAT96) representing a new subtype within the genotype 2 (arbitrarily 2k).</title>
        <authorList>
            <person name="Samokhvalov E.I."/>
            <person name="Hijikata M."/>
            <person name="Gylka R.I."/>
            <person name="Lvov D.K."/>
            <person name="Mishiro S."/>
        </authorList>
    </citation>
    <scope>NUCLEOTIDE SEQUENCE [GENOMIC RNA]</scope>
</reference>
<reference key="2">
    <citation type="journal article" date="2000" name="J. Viral Hepat.">
        <title>Properties of the hepatitis C virus core protein: a structural protein that modulates cellular processes.</title>
        <authorList>
            <person name="McLauchlan J."/>
        </authorList>
    </citation>
    <scope>REVIEW</scope>
</reference>
<reference key="3">
    <citation type="journal article" date="2004" name="Hepatology">
        <title>Structural biology of hepatitis C virus.</title>
        <authorList>
            <person name="Penin F."/>
            <person name="Dubuisson J."/>
            <person name="Rey F.A."/>
            <person name="Moradpour D."/>
            <person name="Pawlotsky J.-M."/>
        </authorList>
    </citation>
    <scope>REVIEW</scope>
</reference>
<name>POLG_HCVVA</name>
<dbReference type="EC" id="3.4.22.-" evidence="3"/>
<dbReference type="EC" id="3.4.21.98" evidence="5"/>
<dbReference type="EC" id="3.6.1.15" evidence="5"/>
<dbReference type="EC" id="3.6.4.13" evidence="5"/>
<dbReference type="EC" id="2.7.7.48" evidence="5"/>
<dbReference type="EMBL" id="AB031663">
    <property type="protein sequence ID" value="BAA88057.1"/>
    <property type="molecule type" value="Genomic_RNA"/>
</dbReference>
<dbReference type="SMR" id="Q9QAX1"/>
<dbReference type="MEROPS" id="S29.001"/>
<dbReference type="euHCVdb" id="AB031663"/>
<dbReference type="Proteomes" id="UP000008102">
    <property type="component" value="Genome"/>
</dbReference>
<dbReference type="GO" id="GO:0044167">
    <property type="term" value="C:host cell endoplasmic reticulum membrane"/>
    <property type="evidence" value="ECO:0007669"/>
    <property type="project" value="UniProtKB-SubCell"/>
</dbReference>
<dbReference type="GO" id="GO:0044186">
    <property type="term" value="C:host cell lipid droplet"/>
    <property type="evidence" value="ECO:0007669"/>
    <property type="project" value="UniProtKB-SubCell"/>
</dbReference>
<dbReference type="GO" id="GO:0044191">
    <property type="term" value="C:host cell mitochondrial membrane"/>
    <property type="evidence" value="ECO:0007669"/>
    <property type="project" value="UniProtKB-SubCell"/>
</dbReference>
<dbReference type="GO" id="GO:0042025">
    <property type="term" value="C:host cell nucleus"/>
    <property type="evidence" value="ECO:0007669"/>
    <property type="project" value="UniProtKB-SubCell"/>
</dbReference>
<dbReference type="GO" id="GO:0044220">
    <property type="term" value="C:host cell perinuclear region of cytoplasm"/>
    <property type="evidence" value="ECO:0007669"/>
    <property type="project" value="UniProtKB-SubCell"/>
</dbReference>
<dbReference type="GO" id="GO:0020002">
    <property type="term" value="C:host cell plasma membrane"/>
    <property type="evidence" value="ECO:0007669"/>
    <property type="project" value="UniProtKB-SubCell"/>
</dbReference>
<dbReference type="GO" id="GO:0016020">
    <property type="term" value="C:membrane"/>
    <property type="evidence" value="ECO:0007669"/>
    <property type="project" value="UniProtKB-KW"/>
</dbReference>
<dbReference type="GO" id="GO:1990904">
    <property type="term" value="C:ribonucleoprotein complex"/>
    <property type="evidence" value="ECO:0007669"/>
    <property type="project" value="UniProtKB-KW"/>
</dbReference>
<dbReference type="GO" id="GO:0019031">
    <property type="term" value="C:viral envelope"/>
    <property type="evidence" value="ECO:0007669"/>
    <property type="project" value="UniProtKB-KW"/>
</dbReference>
<dbReference type="GO" id="GO:0019013">
    <property type="term" value="C:viral nucleocapsid"/>
    <property type="evidence" value="ECO:0007669"/>
    <property type="project" value="UniProtKB-KW"/>
</dbReference>
<dbReference type="GO" id="GO:0055036">
    <property type="term" value="C:virion membrane"/>
    <property type="evidence" value="ECO:0007669"/>
    <property type="project" value="UniProtKB-SubCell"/>
</dbReference>
<dbReference type="GO" id="GO:0005524">
    <property type="term" value="F:ATP binding"/>
    <property type="evidence" value="ECO:0007669"/>
    <property type="project" value="UniProtKB-KW"/>
</dbReference>
<dbReference type="GO" id="GO:0016887">
    <property type="term" value="F:ATP hydrolysis activity"/>
    <property type="evidence" value="ECO:0007669"/>
    <property type="project" value="RHEA"/>
</dbReference>
<dbReference type="GO" id="GO:0015267">
    <property type="term" value="F:channel activity"/>
    <property type="evidence" value="ECO:0007669"/>
    <property type="project" value="UniProtKB-KW"/>
</dbReference>
<dbReference type="GO" id="GO:0004197">
    <property type="term" value="F:cysteine-type endopeptidase activity"/>
    <property type="evidence" value="ECO:0007669"/>
    <property type="project" value="InterPro"/>
</dbReference>
<dbReference type="GO" id="GO:0003723">
    <property type="term" value="F:RNA binding"/>
    <property type="evidence" value="ECO:0007669"/>
    <property type="project" value="UniProtKB-KW"/>
</dbReference>
<dbReference type="GO" id="GO:0003724">
    <property type="term" value="F:RNA helicase activity"/>
    <property type="evidence" value="ECO:0007669"/>
    <property type="project" value="UniProtKB-EC"/>
</dbReference>
<dbReference type="GO" id="GO:0003968">
    <property type="term" value="F:RNA-directed RNA polymerase activity"/>
    <property type="evidence" value="ECO:0007669"/>
    <property type="project" value="UniProtKB-KW"/>
</dbReference>
<dbReference type="GO" id="GO:0004252">
    <property type="term" value="F:serine-type endopeptidase activity"/>
    <property type="evidence" value="ECO:0007669"/>
    <property type="project" value="InterPro"/>
</dbReference>
<dbReference type="GO" id="GO:0017124">
    <property type="term" value="F:SH3 domain binding"/>
    <property type="evidence" value="ECO:0007669"/>
    <property type="project" value="UniProtKB-KW"/>
</dbReference>
<dbReference type="GO" id="GO:0005198">
    <property type="term" value="F:structural molecule activity"/>
    <property type="evidence" value="ECO:0007669"/>
    <property type="project" value="InterPro"/>
</dbReference>
<dbReference type="GO" id="GO:0008270">
    <property type="term" value="F:zinc ion binding"/>
    <property type="evidence" value="ECO:0007669"/>
    <property type="project" value="InterPro"/>
</dbReference>
<dbReference type="GO" id="GO:0075512">
    <property type="term" value="P:clathrin-dependent endocytosis of virus by host cell"/>
    <property type="evidence" value="ECO:0007669"/>
    <property type="project" value="UniProtKB-KW"/>
</dbReference>
<dbReference type="GO" id="GO:0039654">
    <property type="term" value="P:fusion of virus membrane with host endosome membrane"/>
    <property type="evidence" value="ECO:0007669"/>
    <property type="project" value="UniProtKB-KW"/>
</dbReference>
<dbReference type="GO" id="GO:0034220">
    <property type="term" value="P:monoatomic ion transmembrane transport"/>
    <property type="evidence" value="ECO:0007669"/>
    <property type="project" value="UniProtKB-KW"/>
</dbReference>
<dbReference type="GO" id="GO:0006508">
    <property type="term" value="P:proteolysis"/>
    <property type="evidence" value="ECO:0007669"/>
    <property type="project" value="UniProtKB-KW"/>
</dbReference>
<dbReference type="GO" id="GO:0039520">
    <property type="term" value="P:symbiont-mediated activation of host autophagy"/>
    <property type="evidence" value="ECO:0007669"/>
    <property type="project" value="UniProtKB-KW"/>
</dbReference>
<dbReference type="GO" id="GO:0039645">
    <property type="term" value="P:symbiont-mediated perturbation of host cell cycle G1/S transition checkpoint"/>
    <property type="evidence" value="ECO:0007669"/>
    <property type="project" value="UniProtKB-KW"/>
</dbReference>
<dbReference type="GO" id="GO:0039545">
    <property type="term" value="P:symbiont-mediated suppression of host cytoplasmic pattern recognition receptor signaling pathway via inhibition of MAVS activity"/>
    <property type="evidence" value="ECO:0007669"/>
    <property type="project" value="UniProtKB-KW"/>
</dbReference>
<dbReference type="GO" id="GO:0039563">
    <property type="term" value="P:symbiont-mediated suppression of host JAK-STAT cascade via inhibition of STAT1 activity"/>
    <property type="evidence" value="ECO:0007669"/>
    <property type="project" value="UniProtKB-KW"/>
</dbReference>
<dbReference type="GO" id="GO:0039527">
    <property type="term" value="P:symbiont-mediated suppression of host TRAF-mediated signal transduction"/>
    <property type="evidence" value="ECO:0007669"/>
    <property type="project" value="UniProtKB-KW"/>
</dbReference>
<dbReference type="GO" id="GO:0039502">
    <property type="term" value="P:symbiont-mediated suppression of host type I interferon-mediated signaling pathway"/>
    <property type="evidence" value="ECO:0007669"/>
    <property type="project" value="UniProtKB-KW"/>
</dbReference>
<dbReference type="GO" id="GO:0019087">
    <property type="term" value="P:symbiont-mediated transformation of host cell"/>
    <property type="evidence" value="ECO:0007669"/>
    <property type="project" value="InterPro"/>
</dbReference>
<dbReference type="GO" id="GO:0039694">
    <property type="term" value="P:viral RNA genome replication"/>
    <property type="evidence" value="ECO:0007669"/>
    <property type="project" value="InterPro"/>
</dbReference>
<dbReference type="GO" id="GO:0019062">
    <property type="term" value="P:virion attachment to host cell"/>
    <property type="evidence" value="ECO:0007669"/>
    <property type="project" value="UniProtKB-KW"/>
</dbReference>
<dbReference type="CDD" id="cd20903">
    <property type="entry name" value="HCV_p7"/>
    <property type="match status" value="1"/>
</dbReference>
<dbReference type="CDD" id="cd23202">
    <property type="entry name" value="Hepacivirus_RdRp"/>
    <property type="match status" value="1"/>
</dbReference>
<dbReference type="FunFam" id="1.10.820.10:FF:000001">
    <property type="entry name" value="Genome polyprotein"/>
    <property type="match status" value="1"/>
</dbReference>
<dbReference type="FunFam" id="2.30.30.710:FF:000001">
    <property type="entry name" value="Genome polyprotein"/>
    <property type="match status" value="1"/>
</dbReference>
<dbReference type="FunFam" id="3.30.160.890:FF:000001">
    <property type="entry name" value="Genome polyprotein"/>
    <property type="match status" value="1"/>
</dbReference>
<dbReference type="FunFam" id="3.30.70.270:FF:000015">
    <property type="entry name" value="Genome polyprotein"/>
    <property type="match status" value="1"/>
</dbReference>
<dbReference type="FunFam" id="3.40.50.300:FF:000557">
    <property type="entry name" value="Genome polyprotein"/>
    <property type="match status" value="1"/>
</dbReference>
<dbReference type="FunFam" id="3.40.50.300:FF:000717">
    <property type="entry name" value="Genome polyprotein"/>
    <property type="match status" value="1"/>
</dbReference>
<dbReference type="FunFam" id="4.10.710.10:FF:000001">
    <property type="entry name" value="Genome polyprotein"/>
    <property type="match status" value="1"/>
</dbReference>
<dbReference type="Gene3D" id="2.40.10.120">
    <property type="match status" value="1"/>
</dbReference>
<dbReference type="Gene3D" id="3.30.70.270">
    <property type="match status" value="2"/>
</dbReference>
<dbReference type="Gene3D" id="6.10.250.1610">
    <property type="match status" value="1"/>
</dbReference>
<dbReference type="Gene3D" id="6.10.250.1750">
    <property type="match status" value="1"/>
</dbReference>
<dbReference type="Gene3D" id="6.10.250.2920">
    <property type="match status" value="1"/>
</dbReference>
<dbReference type="Gene3D" id="2.20.25.210">
    <property type="entry name" value="Hepatitis C NS5A, domain 1B"/>
    <property type="match status" value="1"/>
</dbReference>
<dbReference type="Gene3D" id="4.10.710.10">
    <property type="entry name" value="Hepatitis C Virus Capsid Protein, Chain A"/>
    <property type="match status" value="1"/>
</dbReference>
<dbReference type="Gene3D" id="3.30.160.890">
    <property type="entry name" value="Hepatitis C virus envelope glycoprotein E1, chain C"/>
    <property type="match status" value="1"/>
</dbReference>
<dbReference type="Gene3D" id="2.30.30.710">
    <property type="entry name" value="Hepatitis C virus non-structural protein NS2, C-terminal domain"/>
    <property type="match status" value="1"/>
</dbReference>
<dbReference type="Gene3D" id="1.20.1280.150">
    <property type="entry name" value="Hepatitis C virus non-structural protein NS2, N-terminal domain"/>
    <property type="match status" value="1"/>
</dbReference>
<dbReference type="Gene3D" id="2.20.25.220">
    <property type="entry name" value="Hepatitis C virus NS5A, 1B domain"/>
    <property type="match status" value="1"/>
</dbReference>
<dbReference type="Gene3D" id="3.40.50.300">
    <property type="entry name" value="P-loop containing nucleotide triphosphate hydrolases"/>
    <property type="match status" value="2"/>
</dbReference>
<dbReference type="Gene3D" id="1.10.820.10">
    <property type="entry name" value="RNA Helicase Chain A , domain 3"/>
    <property type="match status" value="1"/>
</dbReference>
<dbReference type="Gene3D" id="2.40.10.10">
    <property type="entry name" value="Trypsin-like serine proteases"/>
    <property type="match status" value="1"/>
</dbReference>
<dbReference type="InterPro" id="IPR043502">
    <property type="entry name" value="DNA/RNA_pol_sf"/>
</dbReference>
<dbReference type="InterPro" id="IPR011492">
    <property type="entry name" value="Flavi_DEAD"/>
</dbReference>
<dbReference type="InterPro" id="IPR002521">
    <property type="entry name" value="HCV_Core_C"/>
</dbReference>
<dbReference type="InterPro" id="IPR044896">
    <property type="entry name" value="HCV_core_chain_A"/>
</dbReference>
<dbReference type="InterPro" id="IPR002522">
    <property type="entry name" value="HCV_core_N"/>
</dbReference>
<dbReference type="InterPro" id="IPR002519">
    <property type="entry name" value="HCV_Env"/>
</dbReference>
<dbReference type="InterPro" id="IPR002531">
    <property type="entry name" value="HCV_NS1"/>
</dbReference>
<dbReference type="InterPro" id="IPR002518">
    <property type="entry name" value="HCV_NS2"/>
</dbReference>
<dbReference type="InterPro" id="IPR042205">
    <property type="entry name" value="HCV_NS2_C"/>
</dbReference>
<dbReference type="InterPro" id="IPR042209">
    <property type="entry name" value="HCV_NS2_N"/>
</dbReference>
<dbReference type="InterPro" id="IPR000745">
    <property type="entry name" value="HCV_NS4a"/>
</dbReference>
<dbReference type="InterPro" id="IPR001490">
    <property type="entry name" value="HCV_NS4b"/>
</dbReference>
<dbReference type="InterPro" id="IPR002868">
    <property type="entry name" value="HCV_NS5a"/>
</dbReference>
<dbReference type="InterPro" id="IPR013192">
    <property type="entry name" value="HCV_NS5A_1a"/>
</dbReference>
<dbReference type="InterPro" id="IPR013193">
    <property type="entry name" value="HCV_NS5a_1B_dom"/>
</dbReference>
<dbReference type="InterPro" id="IPR038568">
    <property type="entry name" value="HCV_NS5A_1B_sf"/>
</dbReference>
<dbReference type="InterPro" id="IPR024350">
    <property type="entry name" value="HCV_NS5a_C"/>
</dbReference>
<dbReference type="InterPro" id="IPR049913">
    <property type="entry name" value="HCV_p7"/>
</dbReference>
<dbReference type="InterPro" id="IPR014001">
    <property type="entry name" value="Helicase_ATP-bd"/>
</dbReference>
<dbReference type="InterPro" id="IPR001650">
    <property type="entry name" value="Helicase_C-like"/>
</dbReference>
<dbReference type="InterPro" id="IPR004109">
    <property type="entry name" value="HepC_NS3_protease"/>
</dbReference>
<dbReference type="InterPro" id="IPR054175">
    <property type="entry name" value="NS3_helicase_C"/>
</dbReference>
<dbReference type="InterPro" id="IPR038170">
    <property type="entry name" value="NS5A_1a_sf"/>
</dbReference>
<dbReference type="InterPro" id="IPR027417">
    <property type="entry name" value="P-loop_NTPase"/>
</dbReference>
<dbReference type="InterPro" id="IPR009003">
    <property type="entry name" value="Peptidase_S1_PA"/>
</dbReference>
<dbReference type="InterPro" id="IPR043504">
    <property type="entry name" value="Peptidase_S1_PA_chymotrypsin"/>
</dbReference>
<dbReference type="InterPro" id="IPR043128">
    <property type="entry name" value="Rev_trsase/Diguanyl_cyclase"/>
</dbReference>
<dbReference type="InterPro" id="IPR007094">
    <property type="entry name" value="RNA-dir_pol_PSvirus"/>
</dbReference>
<dbReference type="InterPro" id="IPR002166">
    <property type="entry name" value="RNA_pol_HCV"/>
</dbReference>
<dbReference type="Pfam" id="PF07652">
    <property type="entry name" value="Flavi_DEAD"/>
    <property type="match status" value="1"/>
</dbReference>
<dbReference type="Pfam" id="PF01543">
    <property type="entry name" value="HCV_capsid"/>
    <property type="match status" value="1"/>
</dbReference>
<dbReference type="Pfam" id="PF01542">
    <property type="entry name" value="HCV_core"/>
    <property type="match status" value="1"/>
</dbReference>
<dbReference type="Pfam" id="PF01539">
    <property type="entry name" value="HCV_env"/>
    <property type="match status" value="1"/>
</dbReference>
<dbReference type="Pfam" id="PF01560">
    <property type="entry name" value="HCV_NS1"/>
    <property type="match status" value="1"/>
</dbReference>
<dbReference type="Pfam" id="PF01538">
    <property type="entry name" value="HCV_NS2"/>
    <property type="match status" value="1"/>
</dbReference>
<dbReference type="Pfam" id="PF01006">
    <property type="entry name" value="HCV_NS4a"/>
    <property type="match status" value="1"/>
</dbReference>
<dbReference type="Pfam" id="PF01001">
    <property type="entry name" value="HCV_NS4b"/>
    <property type="match status" value="1"/>
</dbReference>
<dbReference type="Pfam" id="PF01506">
    <property type="entry name" value="HCV_NS5a"/>
    <property type="match status" value="1"/>
</dbReference>
<dbReference type="Pfam" id="PF08300">
    <property type="entry name" value="HCV_NS5a_1a"/>
    <property type="match status" value="1"/>
</dbReference>
<dbReference type="Pfam" id="PF08301">
    <property type="entry name" value="HCV_NS5a_1b"/>
    <property type="match status" value="1"/>
</dbReference>
<dbReference type="Pfam" id="PF12941">
    <property type="entry name" value="HCV_NS5a_C"/>
    <property type="match status" value="1"/>
</dbReference>
<dbReference type="Pfam" id="PF22027">
    <property type="entry name" value="NS3_helicase_C"/>
    <property type="match status" value="1"/>
</dbReference>
<dbReference type="Pfam" id="PF02907">
    <property type="entry name" value="Peptidase_S29"/>
    <property type="match status" value="1"/>
</dbReference>
<dbReference type="Pfam" id="PF00998">
    <property type="entry name" value="RdRP_3"/>
    <property type="match status" value="1"/>
</dbReference>
<dbReference type="SMART" id="SM00487">
    <property type="entry name" value="DEXDc"/>
    <property type="match status" value="1"/>
</dbReference>
<dbReference type="SUPFAM" id="SSF56672">
    <property type="entry name" value="DNA/RNA polymerases"/>
    <property type="match status" value="1"/>
</dbReference>
<dbReference type="SUPFAM" id="SSF52540">
    <property type="entry name" value="P-loop containing nucleoside triphosphate hydrolases"/>
    <property type="match status" value="2"/>
</dbReference>
<dbReference type="SUPFAM" id="SSF50494">
    <property type="entry name" value="Trypsin-like serine proteases"/>
    <property type="match status" value="1"/>
</dbReference>
<dbReference type="PROSITE" id="PS51693">
    <property type="entry name" value="HCV_NS2_PRO"/>
    <property type="match status" value="1"/>
</dbReference>
<dbReference type="PROSITE" id="PS51192">
    <property type="entry name" value="HELICASE_ATP_BIND_1"/>
    <property type="match status" value="1"/>
</dbReference>
<dbReference type="PROSITE" id="PS51194">
    <property type="entry name" value="HELICASE_CTER"/>
    <property type="match status" value="1"/>
</dbReference>
<dbReference type="PROSITE" id="PS51822">
    <property type="entry name" value="HV_PV_NS3_PRO"/>
    <property type="match status" value="1"/>
</dbReference>
<dbReference type="PROSITE" id="PS50507">
    <property type="entry name" value="RDRP_SSRNA_POS"/>
    <property type="match status" value="1"/>
</dbReference>